<sequence>MVSKRRLSKSEDKESLTEDASKTRKQPLSKKTKKSHIANEVEENDSIFVKLLKISGIILKTGESQNQLAVDQIAFQKKLFQTLRRHPSYPKIIEEFVSGLESYIEDEDSFRNCLLSCERLQDEEASMGASYSKSLIKLLLGIDILQPAIIKTLFEKLPEYFFENKNSDEINIPRLIVSQLKWLDRVVDGKDLTTKIMQLISIAPENLQHDIITSLPEILGDSQHADVGKELSDLLIENTSLTVPILDVLSSLRLDPNFLLKVRQLVMDKLSSIRLEDLPVIIKFILHSVTAMDTLEVISELREKLDLQHCVLPSRLQASQVKLKSKGRASSSGNQESSGQSCIILLFDVIKSAIRYEKTISEAWIKAIENTASVSEHKVFDLVMLFIIYSTNTQTKKYIDRVLRNKIRSGCIQEQLLQSTFSVHYLVLKDMCSSILSLAQSLLHSLDQSIISFGSLLYKYAFKFFDTYCQQEVVGALVTHICSGNEAEVDTALDVLLELVVLNPSAMMMNAVFVKGILDYLDNISPQQIRKLFYVLSTLAFSKQNEASSHIQDDMHLVIRKQLSSTVFKYKLIGIIGAVTMAGIMAADRSESPSLTQERANLSDEQCTQVTSLLQLVHSCSEQSPQASALYYDEFANLIQHEKLDPKALEWVGHTICNDFQDAFVVDSCVVPEGDFPFPVKALYGLEEYDTQDGIAINLLPLLFSQDFAKDGGPVTSQESGQKLVSPLCLAPYFRLLRLCVERQHNGNLEEIDGLLDCPIFLTDLEPGEKLESMSAKERSFMCSLIFLTLNWFREIVNAFCQETSPEMKGKVLTRLKHIVELQIILEKYLAVTPDYVPPLGNFDVETLDITPHTVTAISAKIRKKGKIERKQKTDGSKTSSSDTLSEEKNSECDPTPSHRGQLNKEFTGKEEKTSLLLHNSHAFFRELDIEVFSILHCGLVTKFILDTEMHTEATEVVQLGPPELLFLLEDLSQKLESMLTPPIARRVPFLKNKGSRNIGFSHLQQRSAQEIVHCVFQLLTPMCNHLENIHNYFQCLAAENHGVVDGPGVKVQEYHIMSSCYQRLLQIFHGLFAWSGFSQPENQNLLYSALHVLSSRLKQGEHSQPLEELLSQSVHYLQNFHQSIPSFQCALYLIRLLMVILEKSTASAQNKEKIASLARQFLCRVWPSGDKEKSNISNDQLHALLCIYLEHTESILKAIEEIAGVGVPELINSPKDASSSTFPTLTRHTFVVFFRVMMAELEKTVKKIEPGTAADSQQIHEEKLLYWNMAVRDFSILINLIKVFDSHPVLHVCLKYGRLFVEAFLKQCMPLLDFSFRKHREDVLSLLETFQLDTRLLHHLCGHSKIHQDTRLTQHVPLLKKTLELLVCRVKAMLTLNNCREAFWLGNLKNRDLQGEEIKSQNSQESTADESEDDMSSQASKSKATEDGEEDEVSAGEKEQDSDESYDDSD</sequence>
<protein>
    <recommendedName>
        <fullName>Fanconi anemia group D2 protein</fullName>
        <shortName>Protein FACD2</shortName>
    </recommendedName>
</protein>
<organism>
    <name type="scientific">Homo sapiens</name>
    <name type="common">Human</name>
    <dbReference type="NCBI Taxonomy" id="9606"/>
    <lineage>
        <taxon>Eukaryota</taxon>
        <taxon>Metazoa</taxon>
        <taxon>Chordata</taxon>
        <taxon>Craniata</taxon>
        <taxon>Vertebrata</taxon>
        <taxon>Euteleostomi</taxon>
        <taxon>Mammalia</taxon>
        <taxon>Eutheria</taxon>
        <taxon>Euarchontoglires</taxon>
        <taxon>Primates</taxon>
        <taxon>Haplorrhini</taxon>
        <taxon>Catarrhini</taxon>
        <taxon>Hominidae</taxon>
        <taxon>Homo</taxon>
    </lineage>
</organism>
<reference key="1">
    <citation type="journal article" date="2001" name="Mol. Cell">
        <title>Positional cloning of a novel Fanconi anemia gene, FANCD2.</title>
        <authorList>
            <person name="Timmers C."/>
            <person name="Taniguchi T."/>
            <person name="Hejna J."/>
            <person name="Reifsteck C."/>
            <person name="Lucas L."/>
            <person name="Bruun D."/>
            <person name="Thayer M."/>
            <person name="Cox B."/>
            <person name="Olson S."/>
            <person name="D'Andrea A.D."/>
            <person name="Moses R."/>
            <person name="Grompe M."/>
        </authorList>
    </citation>
    <scope>NUCLEOTIDE SEQUENCE [GENOMIC DNA / MRNA] (ISOFORMS 1 AND 2)</scope>
    <scope>FUNCTION</scope>
    <scope>TISSUE SPECIFICITY</scope>
    <scope>VARIANTS FANCD2 GLY-126; TRP-302 AND HIS-1236</scope>
    <scope>VARIANT LEU-714</scope>
    <source>
        <tissue>Lymphoblast</tissue>
    </source>
</reference>
<reference key="2">
    <citation type="submission" date="2005-12" db="EMBL/GenBank/DDBJ databases">
        <authorList>
            <consortium name="NIEHS SNPs program"/>
        </authorList>
    </citation>
    <scope>NUCLEOTIDE SEQUENCE [GENOMIC DNA]</scope>
    <scope>VARIANTS ARG-33; MET-61; HIS-65; MET-172; ALA-193; GLN-328; VAL-446; ARG-456; PRO-623; LEU-714; ARG-865 AND VAL-901</scope>
</reference>
<reference key="3">
    <citation type="journal article" date="2004" name="Genome Res.">
        <title>The status, quality, and expansion of the NIH full-length cDNA project: the Mammalian Gene Collection (MGC).</title>
        <authorList>
            <consortium name="The MGC Project Team"/>
        </authorList>
    </citation>
    <scope>NUCLEOTIDE SEQUENCE [LARGE SCALE MRNA] (ISOFORM 4)</scope>
    <source>
        <tissue>Lung</tissue>
    </source>
</reference>
<reference key="4">
    <citation type="journal article" date="2004" name="Nat. Genet.">
        <title>Complete sequencing and characterization of 21,243 full-length human cDNAs.</title>
        <authorList>
            <person name="Ota T."/>
            <person name="Suzuki Y."/>
            <person name="Nishikawa T."/>
            <person name="Otsuki T."/>
            <person name="Sugiyama T."/>
            <person name="Irie R."/>
            <person name="Wakamatsu A."/>
            <person name="Hayashi K."/>
            <person name="Sato H."/>
            <person name="Nagai K."/>
            <person name="Kimura K."/>
            <person name="Makita H."/>
            <person name="Sekine M."/>
            <person name="Obayashi M."/>
            <person name="Nishi T."/>
            <person name="Shibahara T."/>
            <person name="Tanaka T."/>
            <person name="Ishii S."/>
            <person name="Yamamoto J."/>
            <person name="Saito K."/>
            <person name="Kawai Y."/>
            <person name="Isono Y."/>
            <person name="Nakamura Y."/>
            <person name="Nagahari K."/>
            <person name="Murakami K."/>
            <person name="Yasuda T."/>
            <person name="Iwayanagi T."/>
            <person name="Wagatsuma M."/>
            <person name="Shiratori A."/>
            <person name="Sudo H."/>
            <person name="Hosoiri T."/>
            <person name="Kaku Y."/>
            <person name="Kodaira H."/>
            <person name="Kondo H."/>
            <person name="Sugawara M."/>
            <person name="Takahashi M."/>
            <person name="Kanda K."/>
            <person name="Yokoi T."/>
            <person name="Furuya T."/>
            <person name="Kikkawa E."/>
            <person name="Omura Y."/>
            <person name="Abe K."/>
            <person name="Kamihara K."/>
            <person name="Katsuta N."/>
            <person name="Sato K."/>
            <person name="Tanikawa M."/>
            <person name="Yamazaki M."/>
            <person name="Ninomiya K."/>
            <person name="Ishibashi T."/>
            <person name="Yamashita H."/>
            <person name="Murakawa K."/>
            <person name="Fujimori K."/>
            <person name="Tanai H."/>
            <person name="Kimata M."/>
            <person name="Watanabe M."/>
            <person name="Hiraoka S."/>
            <person name="Chiba Y."/>
            <person name="Ishida S."/>
            <person name="Ono Y."/>
            <person name="Takiguchi S."/>
            <person name="Watanabe S."/>
            <person name="Yosida M."/>
            <person name="Hotuta T."/>
            <person name="Kusano J."/>
            <person name="Kanehori K."/>
            <person name="Takahashi-Fujii A."/>
            <person name="Hara H."/>
            <person name="Tanase T.-O."/>
            <person name="Nomura Y."/>
            <person name="Togiya S."/>
            <person name="Komai F."/>
            <person name="Hara R."/>
            <person name="Takeuchi K."/>
            <person name="Arita M."/>
            <person name="Imose N."/>
            <person name="Musashino K."/>
            <person name="Yuuki H."/>
            <person name="Oshima A."/>
            <person name="Sasaki N."/>
            <person name="Aotsuka S."/>
            <person name="Yoshikawa Y."/>
            <person name="Matsunawa H."/>
            <person name="Ichihara T."/>
            <person name="Shiohata N."/>
            <person name="Sano S."/>
            <person name="Moriya S."/>
            <person name="Momiyama H."/>
            <person name="Satoh N."/>
            <person name="Takami S."/>
            <person name="Terashima Y."/>
            <person name="Suzuki O."/>
            <person name="Nakagawa S."/>
            <person name="Senoh A."/>
            <person name="Mizoguchi H."/>
            <person name="Goto Y."/>
            <person name="Shimizu F."/>
            <person name="Wakebe H."/>
            <person name="Hishigaki H."/>
            <person name="Watanabe T."/>
            <person name="Sugiyama A."/>
            <person name="Takemoto M."/>
            <person name="Kawakami B."/>
            <person name="Yamazaki M."/>
            <person name="Watanabe K."/>
            <person name="Kumagai A."/>
            <person name="Itakura S."/>
            <person name="Fukuzumi Y."/>
            <person name="Fujimori Y."/>
            <person name="Komiyama M."/>
            <person name="Tashiro H."/>
            <person name="Tanigami A."/>
            <person name="Fujiwara T."/>
            <person name="Ono T."/>
            <person name="Yamada K."/>
            <person name="Fujii Y."/>
            <person name="Ozaki K."/>
            <person name="Hirao M."/>
            <person name="Ohmori Y."/>
            <person name="Kawabata A."/>
            <person name="Hikiji T."/>
            <person name="Kobatake N."/>
            <person name="Inagaki H."/>
            <person name="Ikema Y."/>
            <person name="Okamoto S."/>
            <person name="Okitani R."/>
            <person name="Kawakami T."/>
            <person name="Noguchi S."/>
            <person name="Itoh T."/>
            <person name="Shigeta K."/>
            <person name="Senba T."/>
            <person name="Matsumura K."/>
            <person name="Nakajima Y."/>
            <person name="Mizuno T."/>
            <person name="Morinaga M."/>
            <person name="Sasaki M."/>
            <person name="Togashi T."/>
            <person name="Oyama M."/>
            <person name="Hata H."/>
            <person name="Watanabe M."/>
            <person name="Komatsu T."/>
            <person name="Mizushima-Sugano J."/>
            <person name="Satoh T."/>
            <person name="Shirai Y."/>
            <person name="Takahashi Y."/>
            <person name="Nakagawa K."/>
            <person name="Okumura K."/>
            <person name="Nagase T."/>
            <person name="Nomura N."/>
            <person name="Kikuchi H."/>
            <person name="Masuho Y."/>
            <person name="Yamashita R."/>
            <person name="Nakai K."/>
            <person name="Yada T."/>
            <person name="Nakamura Y."/>
            <person name="Ohara O."/>
            <person name="Isogai T."/>
            <person name="Sugano S."/>
        </authorList>
    </citation>
    <scope>NUCLEOTIDE SEQUENCE [LARGE SCALE MRNA] OF 161-860 (ISOFORM 1)</scope>
    <source>
        <tissue>Teratocarcinoma</tissue>
    </source>
</reference>
<reference key="5">
    <citation type="journal article" date="2007" name="BMC Genomics">
        <title>The full-ORF clone resource of the German cDNA consortium.</title>
        <authorList>
            <person name="Bechtel S."/>
            <person name="Rosenfelder H."/>
            <person name="Duda A."/>
            <person name="Schmidt C.P."/>
            <person name="Ernst U."/>
            <person name="Wellenreuther R."/>
            <person name="Mehrle A."/>
            <person name="Schuster C."/>
            <person name="Bahr A."/>
            <person name="Bloecker H."/>
            <person name="Heubner D."/>
            <person name="Hoerlein A."/>
            <person name="Michel G."/>
            <person name="Wedler H."/>
            <person name="Koehrer K."/>
            <person name="Ottenwaelder B."/>
            <person name="Poustka A."/>
            <person name="Wiemann S."/>
            <person name="Schupp I."/>
        </authorList>
    </citation>
    <scope>NUCLEOTIDE SEQUENCE [LARGE SCALE MRNA] OF 502-1451 (ISOFORM 3)</scope>
    <source>
        <tissue>Melanoma</tissue>
    </source>
</reference>
<reference key="6">
    <citation type="journal article" date="2001" name="Mol. Cell">
        <title>Interaction of the Fanconi anemia proteins and BRCA1 in a common pathway.</title>
        <authorList>
            <person name="Garcia-Higuera I."/>
            <person name="Taniguchi T."/>
            <person name="Ganesan S."/>
            <person name="Meyn M.S."/>
            <person name="Timmers C."/>
            <person name="Hejna J."/>
            <person name="Grompe M."/>
            <person name="D'Andrea A.D."/>
        </authorList>
    </citation>
    <scope>FUNCTION</scope>
    <scope>SUBCELLULAR LOCATION</scope>
    <scope>UBIQUITINATION AT LYS-561</scope>
    <scope>MUTAGENESIS OF LYS-561</scope>
    <scope>INTERACTION WITH BRCA1</scope>
    <scope>IDENTIFICATION BY MASS SPECTROMETRY</scope>
</reference>
<reference key="7">
    <citation type="journal article" date="2002" name="Blood">
        <title>S-phase-specific interaction of the Fanconi anemia protein, FANCD2, with BRCA1 and RAD51.</title>
        <authorList>
            <person name="Taniguchi T."/>
            <person name="Garcia-Higuera I."/>
            <person name="Andreassen P.R."/>
            <person name="Gregory R.C."/>
            <person name="Grompe M."/>
            <person name="D'Andrea A.D."/>
        </authorList>
    </citation>
    <scope>FUNCTION</scope>
    <scope>UBIQUITINATION</scope>
    <scope>MUTAGENESIS OF LYS-561</scope>
</reference>
<reference key="8">
    <citation type="journal article" date="2002" name="Cell">
        <title>Convergence of the Fanconi anemia and ataxia telangiectasia signaling pathways.</title>
        <authorList>
            <person name="Taniguchi T."/>
            <person name="Garcia-Higuera I."/>
            <person name="Xu B."/>
            <person name="Andreassen P.R."/>
            <person name="Gregory R.C."/>
            <person name="Kim S.-T."/>
            <person name="Lane W.S."/>
            <person name="Kastan M.B."/>
            <person name="D'Andrea A.D."/>
        </authorList>
    </citation>
    <scope>FUNCTION</scope>
    <scope>PHOSPHORYLATION AT SER-222 AND SER-1404</scope>
    <scope>MUTAGENESIS OF SER-222; LYS-561; SER-1257; SER-1401; SER-1404 AND SER-1418</scope>
    <scope>IDENTIFICATION BY MASS SPECTROMETRY</scope>
</reference>
<reference key="9">
    <citation type="journal article" date="2002" name="EMBO J.">
        <title>FANCE: the link between Fanconi anaemia complex assembly and activity.</title>
        <authorList>
            <person name="Pace P."/>
            <person name="Johnson M."/>
            <person name="Tan W.M."/>
            <person name="Mosedale G."/>
            <person name="Sng C."/>
            <person name="Hoatlin M.E."/>
            <person name="de Winter J.P."/>
            <person name="Joenje H."/>
            <person name="Gergely F."/>
            <person name="Patel K.J."/>
        </authorList>
    </citation>
    <scope>SUBCELLULAR LOCATION</scope>
    <scope>INTERACTION WITH FANCE</scope>
</reference>
<reference key="10">
    <citation type="journal article" date="2003" name="Blood">
        <title>Fanconi anemia protein complex: mapping protein interactions in the yeast 2- and 3-hybrid systems.</title>
        <authorList>
            <person name="Gordon S.M."/>
            <person name="Buchwald M."/>
        </authorList>
    </citation>
    <scope>INTERACTION WITH FANCE</scope>
</reference>
<reference key="11">
    <citation type="journal article" date="2003" name="Cancer Res.">
        <title>Menin associates with FANCD2, a protein involved in repair of DNA damage.</title>
        <authorList>
            <person name="Jin S."/>
            <person name="Mao H."/>
            <person name="Schnepp R.W."/>
            <person name="Sykes S.M."/>
            <person name="Silva A.C."/>
            <person name="D'Andrea A.D."/>
            <person name="Hua X."/>
        </authorList>
    </citation>
    <scope>INTERACTION WITH MEN1</scope>
    <scope>IDENTIFICATION BY MASS SPECTROMETRY</scope>
</reference>
<reference key="12">
    <citation type="journal article" date="2003" name="J. Pathol.">
        <title>FANCD2 protein is expressed in proliferating cells of human tissues that are cancer-prone in Fanconi anaemia.</title>
        <authorList>
            <person name="Hoelzel M."/>
            <person name="van Diest P.J."/>
            <person name="Bier P."/>
            <person name="Wallisch M."/>
            <person name="Hoatlin M.E."/>
            <person name="Joenje H."/>
            <person name="de Winter J.P."/>
        </authorList>
    </citation>
    <scope>FUNCTION</scope>
    <scope>TISSUE SPECIFICITY</scope>
    <scope>DEVELOPMENTAL STAGE</scope>
</reference>
<reference key="13">
    <citation type="journal article" date="2003" name="Nat. Genet.">
        <title>A novel ubiquitin ligase is deficient in Fanconi anemia.</title>
        <authorList>
            <person name="Meetei A.R."/>
            <person name="de Winter J.P."/>
            <person name="Medhurst A.L."/>
            <person name="Wallisch M."/>
            <person name="Waisfisz Q."/>
            <person name="van de Vrugt H.J."/>
            <person name="Oostra A.B."/>
            <person name="Yan Z."/>
            <person name="Ling C."/>
            <person name="Bishop C.E."/>
            <person name="Hoatlin M.E."/>
            <person name="Joenje H."/>
            <person name="Wang W."/>
        </authorList>
    </citation>
    <scope>UBIQUITINATION BY FANCL</scope>
</reference>
<reference key="14">
    <citation type="journal article" date="2004" name="EMBO J.">
        <title>The DNA crosslink-induced S-phase checkpoint depends on ATR-CHK1 and ATR-NBS1-FANCD2 pathways.</title>
        <authorList>
            <person name="Pichierri P."/>
            <person name="Rosselli F."/>
        </authorList>
    </citation>
    <scope>PHOSPHORYLATION BY ATR</scope>
</reference>
<reference key="15">
    <citation type="journal article" date="2004" name="EMBO J.">
        <title>BLM and the FANC proteins collaborate in a common pathway in response to stalled replication forks.</title>
        <authorList>
            <person name="Pichierri P."/>
            <person name="Franchitto A."/>
            <person name="Rosselli F."/>
        </authorList>
    </citation>
    <scope>INTERACTION WITH BLM</scope>
</reference>
<reference key="16">
    <citation type="journal article" date="2004" name="Genes Dev.">
        <title>ATR couples FANCD2 monoubiquitination to the DNA-damage response.</title>
        <authorList>
            <person name="Andreassen P.R."/>
            <person name="D'Andrea A.D."/>
            <person name="Taniguchi T."/>
        </authorList>
    </citation>
    <scope>FUNCTION</scope>
    <scope>PHOSPHORYLATION BY ATR</scope>
    <scope>UBIQUITINATION</scope>
</reference>
<reference key="17">
    <citation type="journal article" date="2004" name="Hum. Mol. Genet.">
        <title>Direct interaction of FANCD2 with BRCA2 in DNA damage response pathways.</title>
        <authorList>
            <person name="Hussain S."/>
            <person name="Wilson J.B."/>
            <person name="Medhurst A.L."/>
            <person name="Hejna J."/>
            <person name="Witt E."/>
            <person name="Ananth S."/>
            <person name="Davies A."/>
            <person name="Masson J.-Y."/>
            <person name="Moses R."/>
            <person name="West S.C."/>
            <person name="de Winter J.P."/>
            <person name="Ashworth A."/>
            <person name="Jones N.J."/>
            <person name="Mathew C.G."/>
        </authorList>
    </citation>
    <scope>FUNCTION</scope>
    <scope>INTERACTION WITH BRCA2</scope>
</reference>
<reference key="18">
    <citation type="journal article" date="2004" name="J. Biol. Chem.">
        <title>A role for the Fanconi anemia C protein in maintaining the DNA damage-induced G2 checkpoint.</title>
        <authorList>
            <person name="Freie B.W."/>
            <person name="Ciccone S.L.M."/>
            <person name="Li X."/>
            <person name="Plett P.A."/>
            <person name="Orschell C.M."/>
            <person name="Srour E.F."/>
            <person name="Hanenberg H."/>
            <person name="Schindler D."/>
            <person name="Lee S.-H."/>
            <person name="Clapp D.W."/>
        </authorList>
    </citation>
    <scope>FUNCTION</scope>
</reference>
<reference key="19">
    <citation type="journal article" date="2004" name="Mol. Cell. Biol.">
        <title>Functional interaction of monoubiquitinated FANCD2 and BRCA2/FANCD1 in chromatin.</title>
        <authorList>
            <person name="Wang X.Z."/>
            <person name="Andreassen P.R."/>
            <person name="D'Andrea A.D."/>
        </authorList>
    </citation>
    <scope>UBIQUITINATION</scope>
    <scope>INTERACTION WITH BRCA2</scope>
</reference>
<reference key="20">
    <citation type="journal article" date="2004" name="Nat. Genet.">
        <title>X-linked inheritance of Fanconi anemia complementation group B.</title>
        <authorList>
            <person name="Meetei A.R."/>
            <person name="Levitus M."/>
            <person name="Xue Y."/>
            <person name="Medhurst A.L."/>
            <person name="Zwaan M."/>
            <person name="Ling C."/>
            <person name="Rooimans M.A."/>
            <person name="Bier P."/>
            <person name="Hoatlin M."/>
            <person name="Pals G."/>
            <person name="de Winter J.P."/>
            <person name="Wang W."/>
            <person name="Joenje H."/>
        </authorList>
    </citation>
    <scope>UBIQUITINATION</scope>
</reference>
<reference key="21">
    <citation type="journal article" date="2005" name="Blood">
        <title>Regulated interaction of the Fanconi anemia protein, FANCD2, with chromatin.</title>
        <authorList>
            <person name="Montes de Oca R."/>
            <person name="Andreassen P.R."/>
            <person name="Margossian S.P."/>
            <person name="Gregory R.C."/>
            <person name="Taniguchi T."/>
            <person name="Wang X.Z."/>
            <person name="Houghtaling S."/>
            <person name="Grompe M."/>
            <person name="D'Andrea A.D."/>
        </authorList>
    </citation>
    <scope>FUNCTION</scope>
    <scope>TISSUE SPECIFICITY</scope>
    <scope>MUTAGENESIS OF LYS-561</scope>
    <scope>CHARACTERIZATION (ISOFORM 2)</scope>
</reference>
<reference key="22">
    <citation type="journal article" date="2005" name="Hum. Mol. Genet.">
        <title>The Fanconi anemia pathway is required for the DNA replication stress response and for the regulation of common fragile site stability.</title>
        <authorList>
            <person name="Howlett N.G."/>
            <person name="Taniguchi T."/>
            <person name="Durkin S.G."/>
            <person name="D'Andrea A.D."/>
            <person name="Glover T.W."/>
        </authorList>
    </citation>
    <scope>FUNCTION</scope>
</reference>
<reference key="23">
    <citation type="journal article" date="2005" name="J. Biol. Chem.">
        <title>FANCD2 functions independently of BRCA2 and RAD51 associated homologous recombination in response to DNA damage.</title>
        <authorList>
            <person name="Ohashi A."/>
            <person name="Zdzienicka M.Z."/>
            <person name="Chen J."/>
            <person name="Couch F.J."/>
        </authorList>
    </citation>
    <scope>FUNCTION</scope>
</reference>
<reference key="24">
    <citation type="journal article" date="2005" name="Mol. Cell">
        <title>The deubiquitinating enzyme USP1 regulates the Fanconi Anemia pathway.</title>
        <authorList>
            <person name="Nijman S.M.B."/>
            <person name="Huang T.T."/>
            <person name="Dirac A.M.G."/>
            <person name="Brummelkamp T.R."/>
            <person name="Kerkhoven R.M."/>
            <person name="D'Andrea A.D."/>
            <person name="Bernards R."/>
        </authorList>
    </citation>
    <scope>INTERACTION WITH USP1</scope>
    <scope>DEUBIQUITINATION</scope>
</reference>
<reference key="25">
    <citation type="journal article" date="2005" name="Nat. Genet.">
        <title>A human ortholog of archaeal DNA repair protein Hef is defective in Fanconi anemia complementation group M.</title>
        <authorList>
            <person name="Meetei A.R."/>
            <person name="Medhurst A.L."/>
            <person name="Ling C."/>
            <person name="Xue Y."/>
            <person name="Singh T.R."/>
            <person name="Bier P."/>
            <person name="Steltenpool J."/>
            <person name="Stone S."/>
            <person name="Dokal I."/>
            <person name="Mathew C.G."/>
            <person name="Hoatlin M."/>
            <person name="Joenje H."/>
            <person name="de Winter J.P."/>
            <person name="Wang W."/>
        </authorList>
    </citation>
    <scope>UBIQUITINATION</scope>
</reference>
<reference key="26">
    <citation type="journal article" date="2005" name="Proc. Natl. Acad. Sci. U.S.A.">
        <title>Human Fanconi anemia monoubiquitination pathway promotes homologous DNA repair.</title>
        <authorList>
            <person name="Nakanishi K."/>
            <person name="Yang Y.-G."/>
            <person name="Pierce A.J."/>
            <person name="Taniguchi T."/>
            <person name="Digweed M."/>
            <person name="D'Andrea A.D."/>
            <person name="Wang Z.-Q."/>
            <person name="Jasin M."/>
        </authorList>
    </citation>
    <scope>FUNCTION</scope>
    <scope>MUTAGENESIS OF SER-222 AND LYS-561</scope>
</reference>
<reference key="27">
    <citation type="journal article" date="2006" name="Mol. Cell">
        <title>UBE2T is the E2 in the Fanconi anemia pathway and undergoes negative autoregulation.</title>
        <authorList>
            <person name="Machida Y.J."/>
            <person name="Machida Y."/>
            <person name="Chen Y."/>
            <person name="Gurtan A.M."/>
            <person name="Kupfer G.M."/>
            <person name="D'Andrea A.D."/>
            <person name="Dutta A."/>
        </authorList>
    </citation>
    <scope>UBIQUITINATION</scope>
</reference>
<reference key="28">
    <citation type="journal article" date="2007" name="Cell">
        <title>Identification of the FANCI protein, a monoubiquitinated FANCD2 paralog required for DNA repair.</title>
        <authorList>
            <person name="Smogorzewska A."/>
            <person name="Matsuoka S."/>
            <person name="Vinciguerra P."/>
            <person name="McDonald E.R. III"/>
            <person name="Hurov K.E."/>
            <person name="Luo J."/>
            <person name="Ballif B.A."/>
            <person name="Gygi S.P."/>
            <person name="Hofmann K."/>
            <person name="D'Andrea A.D."/>
            <person name="Elledge S.J."/>
        </authorList>
    </citation>
    <scope>INTERACTION WITH FANCI</scope>
</reference>
<reference key="29">
    <citation type="journal article" date="2007" name="Nat. Struct. Mol. Biol.">
        <title>FANCI is a second monoubiquitinated member of the Fanconi anemia pathway.</title>
        <authorList>
            <person name="Sims A.E."/>
            <person name="Spiteri E."/>
            <person name="Sims R.J. III"/>
            <person name="Arita A.G."/>
            <person name="Lach F.P."/>
            <person name="Landers T."/>
            <person name="Wurm M."/>
            <person name="Freund M."/>
            <person name="Neveling K."/>
            <person name="Hanenberg H."/>
            <person name="Auerbach A.D."/>
            <person name="Huang T.T."/>
        </authorList>
    </citation>
    <scope>INTERACTION WITH FANCI</scope>
</reference>
<reference key="30">
    <citation type="journal article" date="2007" name="Science">
        <title>ATM and ATR substrate analysis reveals extensive protein networks responsive to DNA damage.</title>
        <authorList>
            <person name="Matsuoka S."/>
            <person name="Ballif B.A."/>
            <person name="Smogorzewska A."/>
            <person name="McDonald E.R. III"/>
            <person name="Hurov K.E."/>
            <person name="Luo J."/>
            <person name="Bakalarski C.E."/>
            <person name="Zhao Z."/>
            <person name="Solimini N."/>
            <person name="Lerenthal Y."/>
            <person name="Shiloh Y."/>
            <person name="Gygi S.P."/>
            <person name="Elledge S.J."/>
        </authorList>
    </citation>
    <scope>PHOSPHORYLATION [LARGE SCALE ANALYSIS] AT SER-592 AND SER-1412</scope>
    <scope>IDENTIFICATION BY MASS SPECTROMETRY [LARGE SCALE ANALYSIS]</scope>
    <source>
        <tissue>Embryonic kidney</tissue>
    </source>
</reference>
<reference key="31">
    <citation type="journal article" date="2008" name="Mol. Cell">
        <title>Kinase-selective enrichment enables quantitative phosphoproteomics of the kinome across the cell cycle.</title>
        <authorList>
            <person name="Daub H."/>
            <person name="Olsen J.V."/>
            <person name="Bairlein M."/>
            <person name="Gnad F."/>
            <person name="Oppermann F.S."/>
            <person name="Korner R."/>
            <person name="Greff Z."/>
            <person name="Keri G."/>
            <person name="Stemmann O."/>
            <person name="Mann M."/>
        </authorList>
    </citation>
    <scope>IDENTIFICATION BY MASS SPECTROMETRY [LARGE SCALE ANALYSIS]</scope>
    <source>
        <tissue>Cervix carcinoma</tissue>
    </source>
</reference>
<reference key="32">
    <citation type="journal article" date="2008" name="Mol. Cell">
        <title>Mechanistic insight into site-restricted monoubiquitination of FANCD2 by Ube2t, FANCL, and FANCI.</title>
        <authorList>
            <person name="Alpi A.F."/>
            <person name="Pace P.E."/>
            <person name="Babu M.M."/>
            <person name="Patel K.J."/>
        </authorList>
    </citation>
    <scope>UBIQUITINATION AT LYS-561</scope>
    <scope>MUTAGENESIS OF LYS-561</scope>
</reference>
<reference key="33">
    <citation type="journal article" date="2008" name="Oncogene">
        <title>FANCG promotes formation of a newly identified protein complex containing BRCA2, FANCD2 and XRCC3.</title>
        <authorList>
            <person name="Wilson J.B."/>
            <person name="Yamamoto K."/>
            <person name="Marriott A.S."/>
            <person name="Hussain S."/>
            <person name="Sung P."/>
            <person name="Hoatlin M.E."/>
            <person name="Mathew C.G."/>
            <person name="Takata M."/>
            <person name="Thompson L.H."/>
            <person name="Kupfer G.M."/>
            <person name="Jones N.J."/>
        </authorList>
    </citation>
    <scope>INTERACTION WITH BRCA2; FANCG AND XRCC3</scope>
</reference>
<reference key="34">
    <citation type="journal article" date="2008" name="Oncogene">
        <title>Snm1B/Apollo mediates replication fork collapse and S Phase checkpoint activation in response to DNA interstrand cross-links.</title>
        <authorList>
            <person name="Bae J.B."/>
            <person name="Mukhopadhyay S.S."/>
            <person name="Liu L."/>
            <person name="Zhang N."/>
            <person name="Tan J."/>
            <person name="Akhter S."/>
            <person name="Liu X."/>
            <person name="Shen X."/>
            <person name="Li L."/>
            <person name="Legerski R.J."/>
        </authorList>
    </citation>
    <scope>INTERACTION WITH DCLRE1B</scope>
</reference>
<reference key="35">
    <citation type="journal article" date="2008" name="Proc. Natl. Acad. Sci. U.S.A.">
        <title>A quantitative atlas of mitotic phosphorylation.</title>
        <authorList>
            <person name="Dephoure N."/>
            <person name="Zhou C."/>
            <person name="Villen J."/>
            <person name="Beausoleil S.A."/>
            <person name="Bakalarski C.E."/>
            <person name="Elledge S.J."/>
            <person name="Gygi S.P."/>
        </authorList>
    </citation>
    <scope>PHOSPHORYLATION [LARGE SCALE ANALYSIS] AT SER-1412</scope>
    <scope>IDENTIFICATION BY MASS SPECTROMETRY [LARGE SCALE ANALYSIS]</scope>
    <source>
        <tissue>Cervix carcinoma</tissue>
    </source>
</reference>
<reference key="36">
    <citation type="journal article" date="2009" name="Anal. Chem.">
        <title>Lys-N and trypsin cover complementary parts of the phosphoproteome in a refined SCX-based approach.</title>
        <authorList>
            <person name="Gauci S."/>
            <person name="Helbig A.O."/>
            <person name="Slijper M."/>
            <person name="Krijgsveld J."/>
            <person name="Heck A.J."/>
            <person name="Mohammed S."/>
        </authorList>
    </citation>
    <scope>IDENTIFICATION BY MASS SPECTROMETRY [LARGE SCALE ANALYSIS]</scope>
</reference>
<reference key="37">
    <citation type="journal article" date="2009" name="Mol. Cell. Proteomics">
        <title>Large-scale proteomics analysis of the human kinome.</title>
        <authorList>
            <person name="Oppermann F.S."/>
            <person name="Gnad F."/>
            <person name="Olsen J.V."/>
            <person name="Hornberger R."/>
            <person name="Greff Z."/>
            <person name="Keri G."/>
            <person name="Mann M."/>
            <person name="Daub H."/>
        </authorList>
    </citation>
    <scope>IDENTIFICATION BY MASS SPECTROMETRY [LARGE SCALE ANALYSIS]</scope>
</reference>
<reference key="38">
    <citation type="journal article" date="2009" name="Nat. Cell Biol.">
        <title>Replication stress induces sister-chromatid bridging at fragile site loci in mitosis.</title>
        <authorList>
            <person name="Chan K.L."/>
            <person name="Palmai-Pallag T."/>
            <person name="Ying S."/>
            <person name="Hickson I.D."/>
        </authorList>
    </citation>
    <scope>SUBCELLULAR LOCATION</scope>
</reference>
<reference key="39">
    <citation type="journal article" date="2009" name="Nat. Cell Biol.">
        <title>The FANC pathway and BLM collaborate during mitosis to prevent micro-nucleation and chromosome abnormalities.</title>
        <authorList>
            <person name="Naim V."/>
            <person name="Rosselli F."/>
        </authorList>
    </citation>
    <scope>FUNCTION</scope>
    <scope>SUBCELLULAR LOCATION</scope>
</reference>
<reference key="40">
    <citation type="journal article" date="2010" name="Cell">
        <title>Identification of KIAA1018/FAN1, a DNA repair nuclease recruited to DNA damage by monoubiquitinated FANCD2.</title>
        <authorList>
            <person name="MacKay C."/>
            <person name="Declais A.C."/>
            <person name="Lundin C."/>
            <person name="Agostinho A."/>
            <person name="Deans A.J."/>
            <person name="MacArtney T.J."/>
            <person name="Hofmann K."/>
            <person name="Gartner A."/>
            <person name="West S.C."/>
            <person name="Helleday T."/>
            <person name="Lilley D.M."/>
            <person name="Rouse J."/>
        </authorList>
    </citation>
    <scope>UBIQUITINATION AT LYS-561</scope>
    <scope>INTERACTION WITH MTMR15</scope>
    <scope>MUTAGENESIS OF LYS-561</scope>
</reference>
<reference key="41">
    <citation type="journal article" date="2010" name="Cell">
        <title>Deficiency of FANCD2-associated nuclease KIAA1018/FAN1 sensitizes cells to interstrand crosslinking agents.</title>
        <authorList>
            <person name="Kratz K."/>
            <person name="Schopf B."/>
            <person name="Kaden S."/>
            <person name="Sendoel A."/>
            <person name="Eberhard R."/>
            <person name="Lademann C."/>
            <person name="Cannavo E."/>
            <person name="Sartori A.A."/>
            <person name="Hengartner M.O."/>
            <person name="Jiricny J."/>
        </authorList>
    </citation>
    <scope>UBIQUITINATION AT LYS-561</scope>
    <scope>INTERACTION WITH MTMR15</scope>
    <scope>MUTAGENESIS OF LYS-561</scope>
</reference>
<reference key="42">
    <citation type="journal article" date="2010" name="Mol. Cell">
        <title>A genetic screen identifies FAN1, a Fanconi anemia-associated nuclease necessary for DNA interstrand crosslink repair.</title>
        <authorList>
            <person name="Smogorzewska A."/>
            <person name="Desetty R."/>
            <person name="Saito T.T."/>
            <person name="Schlabach M."/>
            <person name="Lach F.P."/>
            <person name="Sowa M.E."/>
            <person name="Clark A.B."/>
            <person name="Kunkel T.A."/>
            <person name="Harper J.W."/>
            <person name="Colaiacovo M.P."/>
            <person name="Elledge S.J."/>
        </authorList>
    </citation>
    <scope>UBIQUITINATION AT LYS-561</scope>
    <scope>INTERACTION WITH MTMR15</scope>
    <scope>MUTAGENESIS OF LYS-561</scope>
</reference>
<reference key="43">
    <citation type="journal article" date="2010" name="Mol. Cell. Biol.">
        <title>DNA polymerase POLN participates in cross-link repair and homologous recombination.</title>
        <authorList>
            <person name="Moldovan G.L."/>
            <person name="Madhavan M.V."/>
            <person name="Mirchandani K.D."/>
            <person name="McCaffrey R.M."/>
            <person name="Vinciguerra P."/>
            <person name="D'Andrea A.D."/>
        </authorList>
    </citation>
    <scope>INTERACTION WITH POLN</scope>
</reference>
<reference key="44">
    <citation type="journal article" date="2010" name="Sci. Signal.">
        <title>Quantitative phosphoproteomics reveals widespread full phosphorylation site occupancy during mitosis.</title>
        <authorList>
            <person name="Olsen J.V."/>
            <person name="Vermeulen M."/>
            <person name="Santamaria A."/>
            <person name="Kumar C."/>
            <person name="Miller M.L."/>
            <person name="Jensen L.J."/>
            <person name="Gnad F."/>
            <person name="Cox J."/>
            <person name="Jensen T.S."/>
            <person name="Nigg E.A."/>
            <person name="Brunak S."/>
            <person name="Mann M."/>
        </authorList>
    </citation>
    <scope>PHOSPHORYLATION [LARGE SCALE ANALYSIS] AT SER-8; SER-594; SER-717; SER-1412; SER-1423; THR-1426 AND SER-1435</scope>
    <scope>VARIANT [LARGE SCALE ANALYSIS] LEU-714</scope>
    <scope>IDENTIFICATION BY MASS SPECTROMETRY [LARGE SCALE ANALYSIS]</scope>
    <source>
        <tissue>Cervix carcinoma</tissue>
    </source>
</reference>
<reference key="45">
    <citation type="journal article" date="2011" name="BMC Syst. Biol.">
        <title>Initial characterization of the human central proteome.</title>
        <authorList>
            <person name="Burkard T.R."/>
            <person name="Planyavsky M."/>
            <person name="Kaupe I."/>
            <person name="Breitwieser F.P."/>
            <person name="Buerckstuemmer T."/>
            <person name="Bennett K.L."/>
            <person name="Superti-Furga G."/>
            <person name="Colinge J."/>
        </authorList>
    </citation>
    <scope>IDENTIFICATION BY MASS SPECTROMETRY [LARGE SCALE ANALYSIS]</scope>
</reference>
<reference key="46">
    <citation type="journal article" date="2011" name="Sci. Signal.">
        <title>System-wide temporal characterization of the proteome and phosphoproteome of human embryonic stem cell differentiation.</title>
        <authorList>
            <person name="Rigbolt K.T."/>
            <person name="Prokhorova T.A."/>
            <person name="Akimov V."/>
            <person name="Henningsen J."/>
            <person name="Johansen P.T."/>
            <person name="Kratchmarova I."/>
            <person name="Kassem M."/>
            <person name="Mann M."/>
            <person name="Olsen J.V."/>
            <person name="Blagoev B."/>
        </authorList>
    </citation>
    <scope>PHOSPHORYLATION [LARGE SCALE ANALYSIS] AT SER-1435</scope>
    <scope>IDENTIFICATION BY MASS SPECTROMETRY [LARGE SCALE ANALYSIS]</scope>
</reference>
<reference key="47">
    <citation type="journal article" date="2013" name="J. Proteome Res.">
        <title>Toward a comprehensive characterization of a human cancer cell phosphoproteome.</title>
        <authorList>
            <person name="Zhou H."/>
            <person name="Di Palma S."/>
            <person name="Preisinger C."/>
            <person name="Peng M."/>
            <person name="Polat A.N."/>
            <person name="Heck A.J."/>
            <person name="Mohammed S."/>
        </authorList>
    </citation>
    <scope>PHOSPHORYLATION [LARGE SCALE ANALYSIS] AT SER-592; SER-1257 AND SER-1412</scope>
    <scope>IDENTIFICATION BY MASS SPECTROMETRY [LARGE SCALE ANALYSIS]</scope>
    <source>
        <tissue>Cervix carcinoma</tissue>
        <tissue>Erythroleukemia</tissue>
    </source>
</reference>
<reference key="48">
    <citation type="journal article" date="2018" name="PLoS Genet.">
        <title>Identification of UHRF2 as a novel DNA interstrand crosslink sensor protein.</title>
        <authorList>
            <person name="Motnenko A."/>
            <person name="Liang C.C."/>
            <person name="Yang D."/>
            <person name="Lopez-Martinez D."/>
            <person name="Yoshikawa Y."/>
            <person name="Zhan B."/>
            <person name="Ward K.E."/>
            <person name="Tian J."/>
            <person name="Haas W."/>
            <person name="Spingardi P."/>
            <person name="Kessler B.M."/>
            <person name="Kriaucionis S."/>
            <person name="Gygi S.P."/>
            <person name="Cohn M.A."/>
        </authorList>
    </citation>
    <scope>FUNCTION</scope>
    <scope>INTERACTION WITH UHRF1 AND UHRF2</scope>
    <scope>SUBCELLULAR LOCATION</scope>
    <scope>UBIQUITINATION</scope>
</reference>
<reference evidence="40" key="49">
    <citation type="journal article" date="2023" name="EMBO J.">
        <title>Structural and biochemical basis of interdependent FANCI-FANCD2 ubiquitination.</title>
        <authorList>
            <person name="Lemonidis K."/>
            <person name="Rennie M.L."/>
            <person name="Arkinson C."/>
            <person name="Chaugule V.K."/>
            <person name="Clarke M."/>
            <person name="Streetley J."/>
            <person name="Walden H."/>
        </authorList>
    </citation>
    <scope>STRUCTURE BY ELECTRON MICROSCOPY (4.14 ANGSTROMS)</scope>
    <scope>FUNCTION</scope>
    <scope>INTERACTION WITH FANCI</scope>
    <scope>UBIQUITINATION AT LYS-561</scope>
    <scope>DEUBIQUITINATION BY USP1</scope>
</reference>
<evidence type="ECO:0000250" key="1">
    <source>
        <dbReference type="UniProtKB" id="Q68Y81"/>
    </source>
</evidence>
<evidence type="ECO:0000256" key="2">
    <source>
        <dbReference type="SAM" id="MobiDB-lite"/>
    </source>
</evidence>
<evidence type="ECO:0000269" key="3">
    <source>
    </source>
</evidence>
<evidence type="ECO:0000269" key="4">
    <source>
    </source>
</evidence>
<evidence type="ECO:0000269" key="5">
    <source>
    </source>
</evidence>
<evidence type="ECO:0000269" key="6">
    <source>
    </source>
</evidence>
<evidence type="ECO:0000269" key="7">
    <source>
    </source>
</evidence>
<evidence type="ECO:0000269" key="8">
    <source>
    </source>
</evidence>
<evidence type="ECO:0000269" key="9">
    <source>
    </source>
</evidence>
<evidence type="ECO:0000269" key="10">
    <source>
    </source>
</evidence>
<evidence type="ECO:0000269" key="11">
    <source>
    </source>
</evidence>
<evidence type="ECO:0000269" key="12">
    <source>
    </source>
</evidence>
<evidence type="ECO:0000269" key="13">
    <source>
    </source>
</evidence>
<evidence type="ECO:0000269" key="14">
    <source>
    </source>
</evidence>
<evidence type="ECO:0000269" key="15">
    <source>
    </source>
</evidence>
<evidence type="ECO:0000269" key="16">
    <source>
    </source>
</evidence>
<evidence type="ECO:0000269" key="17">
    <source>
    </source>
</evidence>
<evidence type="ECO:0000269" key="18">
    <source>
    </source>
</evidence>
<evidence type="ECO:0000269" key="19">
    <source>
    </source>
</evidence>
<evidence type="ECO:0000269" key="20">
    <source>
    </source>
</evidence>
<evidence type="ECO:0000269" key="21">
    <source>
    </source>
</evidence>
<evidence type="ECO:0000269" key="22">
    <source>
    </source>
</evidence>
<evidence type="ECO:0000269" key="23">
    <source>
    </source>
</evidence>
<evidence type="ECO:0000269" key="24">
    <source>
    </source>
</evidence>
<evidence type="ECO:0000269" key="25">
    <source>
    </source>
</evidence>
<evidence type="ECO:0000269" key="26">
    <source>
    </source>
</evidence>
<evidence type="ECO:0000269" key="27">
    <source>
    </source>
</evidence>
<evidence type="ECO:0000269" key="28">
    <source>
    </source>
</evidence>
<evidence type="ECO:0000269" key="29">
    <source>
    </source>
</evidence>
<evidence type="ECO:0000269" key="30">
    <source>
    </source>
</evidence>
<evidence type="ECO:0000269" key="31">
    <source>
    </source>
</evidence>
<evidence type="ECO:0000269" key="32">
    <source>
    </source>
</evidence>
<evidence type="ECO:0000269" key="33">
    <source>
    </source>
</evidence>
<evidence type="ECO:0000269" key="34">
    <source>
    </source>
</evidence>
<evidence type="ECO:0000269" key="35">
    <source>
    </source>
</evidence>
<evidence type="ECO:0000269" key="36">
    <source ref="2"/>
</evidence>
<evidence type="ECO:0000303" key="37">
    <source>
    </source>
</evidence>
<evidence type="ECO:0000303" key="38">
    <source>
    </source>
</evidence>
<evidence type="ECO:0000305" key="39"/>
<evidence type="ECO:0007744" key="40">
    <source>
        <dbReference type="PDB" id="7ZF1"/>
    </source>
</evidence>
<evidence type="ECO:0007744" key="41">
    <source>
    </source>
</evidence>
<evidence type="ECO:0007744" key="42">
    <source>
    </source>
</evidence>
<evidence type="ECO:0007744" key="43">
    <source>
    </source>
</evidence>
<evidence type="ECO:0007744" key="44">
    <source>
    </source>
</evidence>
<evidence type="ECO:0007744" key="45">
    <source>
    </source>
</evidence>
<evidence type="ECO:0007829" key="46">
    <source>
        <dbReference type="PDB" id="6VAA"/>
    </source>
</evidence>
<evidence type="ECO:0007829" key="47">
    <source>
        <dbReference type="PDB" id="6VAD"/>
    </source>
</evidence>
<evidence type="ECO:0007829" key="48">
    <source>
        <dbReference type="PDB" id="8A9J"/>
    </source>
</evidence>
<keyword id="KW-0002">3D-structure</keyword>
<keyword id="KW-0025">Alternative splicing</keyword>
<keyword id="KW-0131">Cell cycle</keyword>
<keyword id="KW-0225">Disease variant</keyword>
<keyword id="KW-0227">DNA damage</keyword>
<keyword id="KW-0234">DNA repair</keyword>
<keyword id="KW-0923">Fanconi anemia</keyword>
<keyword id="KW-1017">Isopeptide bond</keyword>
<keyword id="KW-0539">Nucleus</keyword>
<keyword id="KW-0597">Phosphoprotein</keyword>
<keyword id="KW-1267">Proteomics identification</keyword>
<keyword id="KW-1185">Reference proteome</keyword>
<keyword id="KW-0832">Ubl conjugation</keyword>
<feature type="chain" id="PRO_0000087168" description="Fanconi anemia group D2 protein">
    <location>
        <begin position="1"/>
        <end position="1451"/>
    </location>
</feature>
<feature type="region of interest" description="Interaction with FANCE">
    <location>
        <begin position="1"/>
        <end position="291"/>
    </location>
</feature>
<feature type="region of interest" description="Disordered" evidence="2">
    <location>
        <begin position="1"/>
        <end position="37"/>
    </location>
</feature>
<feature type="region of interest" description="Interaction with BRCA2">
    <location>
        <begin position="248"/>
        <end position="359"/>
    </location>
</feature>
<feature type="region of interest" description="Disordered" evidence="2">
    <location>
        <begin position="868"/>
        <end position="906"/>
    </location>
</feature>
<feature type="region of interest" description="Disordered" evidence="2">
    <location>
        <begin position="1396"/>
        <end position="1451"/>
    </location>
</feature>
<feature type="compositionally biased region" description="Basic and acidic residues" evidence="2">
    <location>
        <begin position="8"/>
        <end position="22"/>
    </location>
</feature>
<feature type="compositionally biased region" description="Basic residues" evidence="2">
    <location>
        <begin position="23"/>
        <end position="36"/>
    </location>
</feature>
<feature type="compositionally biased region" description="Acidic residues" evidence="2">
    <location>
        <begin position="1428"/>
        <end position="1451"/>
    </location>
</feature>
<feature type="modified residue" description="Phosphoserine" evidence="43">
    <location>
        <position position="8"/>
    </location>
</feature>
<feature type="modified residue" description="Phosphoserine; by ATM" evidence="5">
    <location>
        <position position="222"/>
    </location>
</feature>
<feature type="modified residue" description="Phosphoserine" evidence="41 45">
    <location>
        <position position="592"/>
    </location>
</feature>
<feature type="modified residue" description="Phosphoserine" evidence="43">
    <location>
        <position position="594"/>
    </location>
</feature>
<feature type="modified residue" description="Phosphoserine" evidence="43">
    <location>
        <position position="717"/>
    </location>
</feature>
<feature type="modified residue" description="Phosphoserine" evidence="45">
    <location>
        <position position="1257"/>
    </location>
</feature>
<feature type="modified residue" description="Phosphoserine; by ATM" evidence="39">
    <location>
        <position position="1401"/>
    </location>
</feature>
<feature type="modified residue" description="Phosphoserine; by ATM" evidence="5">
    <location>
        <position position="1404"/>
    </location>
</feature>
<feature type="modified residue" description="Phosphoserine" evidence="41 42 43 45">
    <location>
        <position position="1412"/>
    </location>
</feature>
<feature type="modified residue" description="Phosphoserine" evidence="43">
    <location>
        <position position="1423"/>
    </location>
</feature>
<feature type="modified residue" description="Phosphothreonine" evidence="43">
    <location>
        <position position="1426"/>
    </location>
</feature>
<feature type="modified residue" description="Phosphoserine" evidence="43 44">
    <location>
        <position position="1435"/>
    </location>
</feature>
<feature type="cross-link" description="Glycyl lysine isopeptide (Lys-Gly) (interchain with G-Cter in ubiquitin)" evidence="4 27 31 32 33 35">
    <location>
        <position position="561"/>
    </location>
</feature>
<feature type="splice variant" id="VSP_013883" description="In isoform 4." evidence="37">
    <original>SDLLIENTSL</original>
    <variation>RWINPLSSSK</variation>
    <location>
        <begin position="232"/>
        <end position="241"/>
    </location>
</feature>
<feature type="splice variant" id="VSP_013884" description="In isoform 4." evidence="37">
    <location>
        <begin position="242"/>
        <end position="1451"/>
    </location>
</feature>
<feature type="splice variant" id="VSP_013885" description="In isoform 3." evidence="38">
    <original>HTFVVFFRVMMAELEKTVKKI</original>
    <variation>FMKRNSSTGTWLFETSVSSST</variation>
    <location>
        <begin position="1229"/>
        <end position="1249"/>
    </location>
</feature>
<feature type="splice variant" id="VSP_013886" description="In isoform 3." evidence="38">
    <location>
        <begin position="1250"/>
        <end position="1451"/>
    </location>
</feature>
<feature type="splice variant" id="VSP_057198" description="In isoform 1.">
    <original>DGEEDEVSAGEKEQDSDESYDDSD</original>
    <variation>VSLQNPPESGTDGCILLIVLSWWSRTLPTYVYCQMLLCPFPFPP</variation>
    <location>
        <begin position="1428"/>
        <end position="1451"/>
    </location>
</feature>
<feature type="sequence variant" id="VAR_025827" description="In dbSNP:rs34691009." evidence="36">
    <original>K</original>
    <variation>R</variation>
    <location>
        <position position="33"/>
    </location>
</feature>
<feature type="sequence variant" id="VAR_025828" description="In dbSNP:rs35110529." evidence="36">
    <original>T</original>
    <variation>M</variation>
    <location>
        <position position="61"/>
    </location>
</feature>
<feature type="sequence variant" id="VAR_025829" description="In dbSNP:rs36084488." evidence="36">
    <original>Q</original>
    <variation>H</variation>
    <location>
        <position position="65"/>
    </location>
</feature>
<feature type="sequence variant" id="VAR_022559" description="In FANCD2; dbSNP:rs764507146." evidence="3">
    <original>S</original>
    <variation>G</variation>
    <location>
        <position position="126"/>
    </location>
</feature>
<feature type="sequence variant" id="VAR_025830" description="In dbSNP:rs35173688." evidence="36">
    <original>I</original>
    <variation>M</variation>
    <location>
        <position position="172"/>
    </location>
</feature>
<feature type="sequence variant" id="VAR_025831" description="In dbSNP:rs34936017." evidence="36">
    <original>T</original>
    <variation>A</variation>
    <location>
        <position position="193"/>
    </location>
</feature>
<feature type="sequence variant" id="VAR_022560" description="In FANCD2; dbSNP:rs121917787." evidence="3">
    <original>R</original>
    <variation>W</variation>
    <location>
        <position position="302"/>
    </location>
</feature>
<feature type="sequence variant" id="VAR_025832" description="In dbSNP:rs35625434." evidence="36">
    <original>R</original>
    <variation>Q</variation>
    <location>
        <position position="328"/>
    </location>
</feature>
<feature type="sequence variant" id="VAR_025833" description="In dbSNP:rs34557223." evidence="36">
    <original>L</original>
    <variation>V</variation>
    <location>
        <position position="446"/>
    </location>
</feature>
<feature type="sequence variant" id="VAR_025834" description="In dbSNP:rs35782247." evidence="36">
    <original>L</original>
    <variation>R</variation>
    <location>
        <position position="456"/>
    </location>
</feature>
<feature type="sequence variant" id="VAR_025835" description="In dbSNP:rs36070315." evidence="36">
    <original>Q</original>
    <variation>P</variation>
    <location>
        <position position="623"/>
    </location>
</feature>
<feature type="sequence variant" id="VAR_022561" description="In dbSNP:rs3864017." evidence="3 36 43">
    <original>P</original>
    <variation>L</variation>
    <location>
        <position position="714"/>
    </location>
</feature>
<feature type="sequence variant" id="VAR_025836" description="In dbSNP:rs35546777." evidence="36">
    <original>K</original>
    <variation>R</variation>
    <location>
        <position position="865"/>
    </location>
</feature>
<feature type="sequence variant" id="VAR_025837" description="In dbSNP:rs35495399." evidence="36">
    <original>G</original>
    <variation>V</variation>
    <location>
        <position position="901"/>
    </location>
</feature>
<feature type="sequence variant" id="VAR_022562" description="In FANCD2; no effect on ubiquitination; dbSNP:rs121917786." evidence="3">
    <original>R</original>
    <variation>H</variation>
    <location>
        <position position="1236"/>
    </location>
</feature>
<feature type="mutagenesis site" description="Reduces phosphorylation by ATM. No effect on ubiquitination, foci formation or DNA repair ability, but impairs S-phase checkpoint activation." evidence="5 19">
    <original>S</original>
    <variation>A</variation>
    <location>
        <position position="222"/>
    </location>
</feature>
<feature type="mutagenesis site" description="Abolishes ubiquitination; impairs chromatin binding, foci formation and DNA repair. Abolishes interaction with MTMR15/FAN1. No effect on S-222 phosphorylation by ATM." evidence="4 5 7 18 19 27 31 32 33">
    <original>K</original>
    <variation>R</variation>
    <location>
        <position position="561"/>
    </location>
</feature>
<feature type="mutagenesis site" description="No effect on phosphorylation by ATM." evidence="5">
    <original>S</original>
    <variation>A</variation>
    <location>
        <position position="1257"/>
    </location>
</feature>
<feature type="mutagenesis site" description="Reduces phosphorylation by ATM; when associated with A-1404 and A-1418." evidence="5">
    <original>S</original>
    <variation>A</variation>
    <location>
        <position position="1401"/>
    </location>
</feature>
<feature type="mutagenesis site" description="Reduces phosphorylation by ATM; when associated with A-1401 and A-1418." evidence="5">
    <original>S</original>
    <variation>A</variation>
    <location>
        <position position="1404"/>
    </location>
</feature>
<feature type="mutagenesis site" description="Reduces phosphorylation by ATM; when associated with A-1401 and A-1404." evidence="5">
    <original>S</original>
    <variation>A</variation>
    <location>
        <position position="1418"/>
    </location>
</feature>
<feature type="sequence conflict" description="In Ref. 4; BAB14132." evidence="39" ref="4">
    <original>N</original>
    <variation>D</variation>
    <location>
        <position position="257"/>
    </location>
</feature>
<feature type="sequence conflict" description="In Ref. 4; BAB14132." evidence="39" ref="4">
    <original>L</original>
    <variation>S</variation>
    <location>
        <position position="557"/>
    </location>
</feature>
<feature type="sequence conflict" description="In Ref. 4; BAB14132." evidence="39" ref="4">
    <original>R</original>
    <variation>G</variation>
    <location>
        <position position="589"/>
    </location>
</feature>
<feature type="helix" evidence="47">
    <location>
        <begin position="47"/>
        <end position="55"/>
    </location>
</feature>
<feature type="strand" evidence="47">
    <location>
        <begin position="62"/>
        <end position="64"/>
    </location>
</feature>
<feature type="strand" evidence="47">
    <location>
        <begin position="67"/>
        <end position="70"/>
    </location>
</feature>
<feature type="helix" evidence="47">
    <location>
        <begin position="72"/>
        <end position="85"/>
    </location>
</feature>
<feature type="strand" evidence="47">
    <location>
        <begin position="86"/>
        <end position="88"/>
    </location>
</feature>
<feature type="helix" evidence="47">
    <location>
        <begin position="89"/>
        <end position="103"/>
    </location>
</feature>
<feature type="helix" evidence="47">
    <location>
        <begin position="107"/>
        <end position="114"/>
    </location>
</feature>
<feature type="strand" evidence="46">
    <location>
        <begin position="115"/>
        <end position="119"/>
    </location>
</feature>
<feature type="strand" evidence="46">
    <location>
        <begin position="131"/>
        <end position="134"/>
    </location>
</feature>
<feature type="helix" evidence="47">
    <location>
        <begin position="135"/>
        <end position="140"/>
    </location>
</feature>
<feature type="turn" evidence="47">
    <location>
        <begin position="143"/>
        <end position="145"/>
    </location>
</feature>
<feature type="helix" evidence="47">
    <location>
        <begin position="146"/>
        <end position="154"/>
    </location>
</feature>
<feature type="helix" evidence="47">
    <location>
        <begin position="157"/>
        <end position="160"/>
    </location>
</feature>
<feature type="helix" evidence="47">
    <location>
        <begin position="172"/>
        <end position="178"/>
    </location>
</feature>
<feature type="turn" evidence="47">
    <location>
        <begin position="179"/>
        <end position="182"/>
    </location>
</feature>
<feature type="helix" evidence="47">
    <location>
        <begin position="189"/>
        <end position="202"/>
    </location>
</feature>
<feature type="helix" evidence="47">
    <location>
        <begin position="205"/>
        <end position="213"/>
    </location>
</feature>
<feature type="helix" evidence="47">
    <location>
        <begin position="215"/>
        <end position="218"/>
    </location>
</feature>
<feature type="helix" evidence="47">
    <location>
        <begin position="224"/>
        <end position="237"/>
    </location>
</feature>
<feature type="helix" evidence="47">
    <location>
        <begin position="242"/>
        <end position="251"/>
    </location>
</feature>
<feature type="helix" evidence="48">
    <location>
        <begin position="256"/>
        <end position="268"/>
    </location>
</feature>
<feature type="turn" evidence="48">
    <location>
        <begin position="269"/>
        <end position="272"/>
    </location>
</feature>
<feature type="helix" evidence="47">
    <location>
        <begin position="275"/>
        <end position="277"/>
    </location>
</feature>
<feature type="helix" evidence="48">
    <location>
        <begin position="278"/>
        <end position="287"/>
    </location>
</feature>
<feature type="turn" evidence="48">
    <location>
        <begin position="291"/>
        <end position="293"/>
    </location>
</feature>
<feature type="helix" evidence="48">
    <location>
        <begin position="294"/>
        <end position="304"/>
    </location>
</feature>
<feature type="strand" evidence="47">
    <location>
        <begin position="307"/>
        <end position="309"/>
    </location>
</feature>
<feature type="helix" evidence="48">
    <location>
        <begin position="339"/>
        <end position="353"/>
    </location>
</feature>
<feature type="helix" evidence="48">
    <location>
        <begin position="358"/>
        <end position="370"/>
    </location>
</feature>
<feature type="turn" evidence="48">
    <location>
        <begin position="374"/>
        <end position="376"/>
    </location>
</feature>
<feature type="helix" evidence="48">
    <location>
        <begin position="379"/>
        <end position="391"/>
    </location>
</feature>
<feature type="helix" evidence="48">
    <location>
        <begin position="393"/>
        <end position="395"/>
    </location>
</feature>
<feature type="helix" evidence="48">
    <location>
        <begin position="396"/>
        <end position="408"/>
    </location>
</feature>
<feature type="helix" evidence="48">
    <location>
        <begin position="414"/>
        <end position="423"/>
    </location>
</feature>
<feature type="helix" evidence="48">
    <location>
        <begin position="425"/>
        <end position="428"/>
    </location>
</feature>
<feature type="helix" evidence="48">
    <location>
        <begin position="429"/>
        <end position="431"/>
    </location>
</feature>
<feature type="helix" evidence="48">
    <location>
        <begin position="432"/>
        <end position="443"/>
    </location>
</feature>
<feature type="strand" evidence="47">
    <location>
        <begin position="444"/>
        <end position="447"/>
    </location>
</feature>
<feature type="helix" evidence="48">
    <location>
        <begin position="448"/>
        <end position="464"/>
    </location>
</feature>
<feature type="helix" evidence="48">
    <location>
        <begin position="467"/>
        <end position="481"/>
    </location>
</feature>
<feature type="helix" evidence="48">
    <location>
        <begin position="486"/>
        <end position="502"/>
    </location>
</feature>
<feature type="helix" evidence="48">
    <location>
        <begin position="504"/>
        <end position="508"/>
    </location>
</feature>
<feature type="helix" evidence="48">
    <location>
        <begin position="511"/>
        <end position="515"/>
    </location>
</feature>
<feature type="helix" evidence="48">
    <location>
        <begin position="516"/>
        <end position="520"/>
    </location>
</feature>
<feature type="helix" evidence="48">
    <location>
        <begin position="526"/>
        <end position="540"/>
    </location>
</feature>
<feature type="helix" evidence="47">
    <location>
        <begin position="543"/>
        <end position="545"/>
    </location>
</feature>
<feature type="helix" evidence="48">
    <location>
        <begin position="546"/>
        <end position="563"/>
    </location>
</feature>
<feature type="helix" evidence="48">
    <location>
        <begin position="568"/>
        <end position="585"/>
    </location>
</feature>
<feature type="helix" evidence="48">
    <location>
        <begin position="604"/>
        <end position="621"/>
    </location>
</feature>
<feature type="helix" evidence="48">
    <location>
        <begin position="625"/>
        <end position="641"/>
    </location>
</feature>
<feature type="helix" evidence="48">
    <location>
        <begin position="646"/>
        <end position="663"/>
    </location>
</feature>
<feature type="strand" evidence="48">
    <location>
        <begin position="665"/>
        <end position="670"/>
    </location>
</feature>
<feature type="strand" evidence="48">
    <location>
        <begin position="681"/>
        <end position="684"/>
    </location>
</feature>
<feature type="strand" evidence="47">
    <location>
        <begin position="687"/>
        <end position="689"/>
    </location>
</feature>
<feature type="strand" evidence="48">
    <location>
        <begin position="695"/>
        <end position="697"/>
    </location>
</feature>
<feature type="helix" evidence="48">
    <location>
        <begin position="699"/>
        <end position="705"/>
    </location>
</feature>
<feature type="helix" evidence="48">
    <location>
        <begin position="727"/>
        <end position="729"/>
    </location>
</feature>
<feature type="helix" evidence="48">
    <location>
        <begin position="730"/>
        <end position="745"/>
    </location>
</feature>
<feature type="helix" evidence="48">
    <location>
        <begin position="750"/>
        <end position="752"/>
    </location>
</feature>
<feature type="helix" evidence="48">
    <location>
        <begin position="753"/>
        <end position="757"/>
    </location>
</feature>
<feature type="strand" evidence="48">
    <location>
        <begin position="760"/>
        <end position="762"/>
    </location>
</feature>
<feature type="turn" evidence="48">
    <location>
        <begin position="771"/>
        <end position="773"/>
    </location>
</feature>
<feature type="helix" evidence="48">
    <location>
        <begin position="776"/>
        <end position="799"/>
    </location>
</feature>
<feature type="turn" evidence="48">
    <location>
        <begin position="800"/>
        <end position="802"/>
    </location>
</feature>
<feature type="helix" evidence="48">
    <location>
        <begin position="806"/>
        <end position="831"/>
    </location>
</feature>
<feature type="turn" evidence="47">
    <location>
        <begin position="843"/>
        <end position="845"/>
    </location>
</feature>
<feature type="helix" evidence="47">
    <location>
        <begin position="846"/>
        <end position="850"/>
    </location>
</feature>
<feature type="helix" evidence="48">
    <location>
        <begin position="921"/>
        <end position="924"/>
    </location>
</feature>
<feature type="helix" evidence="48">
    <location>
        <begin position="930"/>
        <end position="937"/>
    </location>
</feature>
<feature type="helix" evidence="48">
    <location>
        <begin position="962"/>
        <end position="979"/>
    </location>
</feature>
<feature type="helix" evidence="48">
    <location>
        <begin position="1002"/>
        <end position="1005"/>
    </location>
</feature>
<feature type="helix" evidence="48">
    <location>
        <begin position="1009"/>
        <end position="1017"/>
    </location>
</feature>
<feature type="helix" evidence="48">
    <location>
        <begin position="1020"/>
        <end position="1035"/>
    </location>
</feature>
<feature type="helix" evidence="48">
    <location>
        <begin position="1036"/>
        <end position="1038"/>
    </location>
</feature>
<feature type="helix" evidence="48">
    <location>
        <begin position="1052"/>
        <end position="1073"/>
    </location>
</feature>
<feature type="helix" evidence="48">
    <location>
        <begin position="1076"/>
        <end position="1079"/>
    </location>
</feature>
<feature type="helix" evidence="48">
    <location>
        <begin position="1084"/>
        <end position="1095"/>
    </location>
</feature>
<feature type="turn" evidence="48">
    <location>
        <begin position="1096"/>
        <end position="1098"/>
    </location>
</feature>
<feature type="helix" evidence="48">
    <location>
        <begin position="1107"/>
        <end position="1119"/>
    </location>
</feature>
<feature type="helix" evidence="48">
    <location>
        <begin position="1120"/>
        <end position="1122"/>
    </location>
</feature>
<feature type="helix" evidence="48">
    <location>
        <begin position="1128"/>
        <end position="1144"/>
    </location>
</feature>
<feature type="helix" evidence="48">
    <location>
        <begin position="1151"/>
        <end position="1164"/>
    </location>
</feature>
<feature type="helix" evidence="47">
    <location>
        <begin position="1171"/>
        <end position="1175"/>
    </location>
</feature>
<feature type="helix" evidence="48">
    <location>
        <begin position="1179"/>
        <end position="1192"/>
    </location>
</feature>
<feature type="helix" evidence="48">
    <location>
        <begin position="1196"/>
        <end position="1205"/>
    </location>
</feature>
<feature type="helix" evidence="48">
    <location>
        <begin position="1207"/>
        <end position="1213"/>
    </location>
</feature>
<feature type="strand" evidence="47">
    <location>
        <begin position="1222"/>
        <end position="1225"/>
    </location>
</feature>
<feature type="turn" evidence="48">
    <location>
        <begin position="1228"/>
        <end position="1230"/>
    </location>
</feature>
<feature type="helix" evidence="48">
    <location>
        <begin position="1231"/>
        <end position="1247"/>
    </location>
</feature>
<feature type="strand" evidence="47">
    <location>
        <begin position="1254"/>
        <end position="1256"/>
    </location>
</feature>
<feature type="helix" evidence="48">
    <location>
        <begin position="1258"/>
        <end position="1280"/>
    </location>
</feature>
<feature type="turn" evidence="48">
    <location>
        <begin position="1281"/>
        <end position="1284"/>
    </location>
</feature>
<feature type="helix" evidence="48">
    <location>
        <begin position="1288"/>
        <end position="1308"/>
    </location>
</feature>
<feature type="helix" evidence="48">
    <location>
        <begin position="1310"/>
        <end position="1315"/>
    </location>
</feature>
<feature type="strand" evidence="48">
    <location>
        <begin position="1316"/>
        <end position="1320"/>
    </location>
</feature>
<feature type="helix" evidence="48">
    <location>
        <begin position="1322"/>
        <end position="1348"/>
    </location>
</feature>
<feature type="helix" evidence="48">
    <location>
        <begin position="1351"/>
        <end position="1354"/>
    </location>
</feature>
<feature type="helix" evidence="48">
    <location>
        <begin position="1357"/>
        <end position="1377"/>
    </location>
</feature>
<feature type="helix" evidence="48">
    <location>
        <begin position="1381"/>
        <end position="1383"/>
    </location>
</feature>
<feature type="strand" evidence="48">
    <location>
        <begin position="1386"/>
        <end position="1388"/>
    </location>
</feature>
<feature type="strand" evidence="48">
    <location>
        <begin position="1394"/>
        <end position="1396"/>
    </location>
</feature>
<gene>
    <name type="primary">FANCD2</name>
    <name type="synonym">FACD</name>
</gene>
<comment type="function">
    <text evidence="1 3 4 5 7 11 13 16 17 18 19 20 21 28 34 35">Required for maintenance of chromosomal stability (PubMed:11239453, PubMed:14517836). Promotes accurate and efficient pairing of homologs during meiosis (PubMed:14517836). Involved in the repair of DNA double-strand breaks, both by homologous recombination and single-strand annealing (PubMed:15671039, PubMed:15650050, PubMed:30335751, PubMed:36385258). The FANCI-FANCD2 complex binds and scans double-stranded DNA (dsDNA) for DNA damage; this complex stalls at DNA junctions between double-stranded DNA and single-stranded DNA (By similarity). May participate in S phase and G2 phase checkpoint activation upon DNA damage (PubMed:15377654). Plays a role in preventing breakage and loss of missegregating chromatin at the end of cell division, particularly after replication stress (PubMed:15454491, PubMed:15661754). Required for the targeting, or stabilization, of BLM to non-centromeric abnormal structures induced by replicative stress (PubMed:15661754, PubMed:19465921). Promotes BRCA2/FANCD1 loading onto damaged chromatin (PubMed:11239454, PubMed:12239151, PubMed:12086603, PubMed:15115758, PubMed:15199141, PubMed:15671039, PubMed:18212739). May also be involved in B-cell immunoglobulin isotype switching.</text>
</comment>
<comment type="subunit">
    <text evidence="1 4 6 8 9 13 14 15 22 23 24 25 26 30 31 32 33 34">Homodimer; cannot be ubiquitinated and does not bind DNA (By similarity). Part of a FANCI-FANCD2 heterodimeric complex that binds and scans dsDNA for DNA damage (PubMed:36385258). Interacts directly with FANCE and FANCI (PubMed:12093742, PubMed:12649160, PubMed:17412408, PubMed:17460694). Interacts with USP1 and MEN1 (PubMed:12874027, PubMed:15694335). The ubiquitinated form specifically interacts with BRCA1 and BLM (PubMed:11239454, PubMed:15257300). Both the nonubiquitinated and the monoubiquitinated forms interact with BRCA2; this interaction is mediated by phosphorylated FANCG and the complex also includes XCCR3 (PubMed:15115758, PubMed:15199141, PubMed:18212739). The ubiquitinated form specifically interacts with MTMR15/FAN1 (via UBZ-type zinc finger), leading to recruit MTMR15/FAN1 to sites of DNA damage (PubMed:20603015, PubMed:20603016, PubMed:20603073). Interacts with DCLRE1B/Apollo (PubMed:18469862). Interacts with POLN (PubMed:19995904). Interacts with UHRF1 and UHRF2; these interactions promote FANCD2 activation (PubMed:30335751).</text>
</comment>
<comment type="interaction">
    <interactant intactId="EBI-359343">
        <id>Q9BXW9</id>
    </interactant>
    <interactant intactId="EBI-79792">
        <id>P51587</id>
        <label>BRCA2</label>
    </interactant>
    <organismsDiffer>false</organismsDiffer>
    <experiments>16</experiments>
</comment>
<comment type="interaction">
    <interactant intactId="EBI-359343">
        <id>Q9BXW9</id>
    </interactant>
    <interactant intactId="EBI-7962058">
        <id>P49716</id>
        <label>CEBPD</label>
    </interactant>
    <organismsDiffer>false</organismsDiffer>
    <experiments>8</experiments>
</comment>
<comment type="interaction">
    <interactant intactId="EBI-359343">
        <id>Q9BXW9</id>
    </interactant>
    <interactant intactId="EBI-297353">
        <id>P00533</id>
        <label>EGFR</label>
    </interactant>
    <organismsDiffer>false</organismsDiffer>
    <experiments>2</experiments>
</comment>
<comment type="interaction">
    <interactant intactId="EBI-359343">
        <id>Q9BXW9</id>
    </interactant>
    <interactant intactId="EBI-1013291">
        <id>Q9NVI1</id>
        <label>FANCI</label>
    </interactant>
    <organismsDiffer>false</organismsDiffer>
    <experiments>2</experiments>
</comment>
<comment type="interaction">
    <interactant intactId="EBI-359343">
        <id>Q9BXW9</id>
    </interactant>
    <interactant intactId="EBI-351076">
        <id>Q16658</id>
        <label>FSCN1</label>
    </interactant>
    <organismsDiffer>false</organismsDiffer>
    <experiments>6</experiments>
</comment>
<comment type="interaction">
    <interactant intactId="EBI-359343">
        <id>Q9BXW9</id>
    </interactant>
    <interactant intactId="EBI-592789">
        <id>O00255</id>
        <label>MEN1</label>
    </interactant>
    <organismsDiffer>false</organismsDiffer>
    <experiments>4</experiments>
</comment>
<comment type="interaction">
    <interactant intactId="EBI-359343">
        <id>Q9BXW9</id>
    </interactant>
    <interactant intactId="EBI-396513">
        <id>P49959</id>
        <label>MRE11</label>
    </interactant>
    <organismsDiffer>false</organismsDiffer>
    <experiments>6</experiments>
</comment>
<comment type="interaction">
    <interactant intactId="EBI-359343">
        <id>Q9BXW9</id>
    </interactant>
    <interactant intactId="EBI-494844">
        <id>O60934</id>
        <label>NBN</label>
    </interactant>
    <organismsDiffer>false</organismsDiffer>
    <experiments>6</experiments>
</comment>
<comment type="interaction">
    <interactant intactId="EBI-596878">
        <id>Q9BXW9-2</id>
    </interactant>
    <interactant intactId="EBI-79792">
        <id>P51587</id>
        <label>BRCA2</label>
    </interactant>
    <organismsDiffer>false</organismsDiffer>
    <experiments>3</experiments>
</comment>
<comment type="subcellular location">
    <subcellularLocation>
        <location evidence="4 6 28 29 34">Nucleus</location>
    </subcellularLocation>
    <text>Concentrates in nuclear foci during S phase and upon genotoxic stress. At the onset of mitosis, excluded from chromosomes and diffuses into the cytoplasm, returning to the nucleus at the end of cell division. Observed in a few spots localized in pairs on the sister chromatids of mitotic chromosome arms and not centromeres, one on each chromatids. These foci coincide with common fragile sites and could be sites of replication fork stalling. The foci are frequently interlinked through BLM-associated ultra-fine DNA bridges. Following aphidicolin treatment, targets chromatid gaps and breaks.</text>
</comment>
<comment type="alternative products">
    <event type="alternative splicing"/>
    <isoform>
        <id>Q9BXW9-2</id>
        <name>2</name>
        <sequence type="displayed"/>
    </isoform>
    <isoform>
        <id>Q9BXW9-1</id>
        <name>1</name>
        <sequence type="described" ref="VSP_057198"/>
    </isoform>
    <isoform>
        <id>Q9BXW9-3</id>
        <name>3</name>
        <sequence type="described" ref="VSP_013885 VSP_013886"/>
    </isoform>
    <isoform>
        <id>Q9BXW9-4</id>
        <name>4</name>
        <sequence type="described" ref="VSP_013883 VSP_013884"/>
    </isoform>
</comment>
<comment type="tissue specificity">
    <text evidence="3 11 18">Highly expressed in germinal center cells of the spleen, tonsil, and reactive lymph nodes, and in the proliferating basal layer of squamous epithelium of tonsil, esophagus, oropharynx, larynx and cervix. Expressed in cytotrophoblastic cells of the placenta and exocrine cells of the pancreas (at protein level). Highly expressed in testis, where expression is restricted to maturing spermatocytes.</text>
</comment>
<comment type="developmental stage">
    <text evidence="11">Highly expressed in fetal oocytes, and in hematopoietic cells of the fetal liver and bone marrow (at protein level).</text>
</comment>
<comment type="domain">
    <text>The C-terminal 24 residues of isoform 2 are required for its function.</text>
</comment>
<comment type="PTM">
    <text evidence="1 4 5 10 22 27 31 32 33 34 35">Monoubiquitinated on Lys-561 during S phase and upon genotoxic stress by FANCL in complex with E2 ligases UBE2T or UBE2W (isoform 1 and isoform 2) (PubMed:11239454, PubMed:12973351, PubMed:19111657, PubMed:20603015, PubMed:20603016, PubMed:20603073, PubMed:36385258). Deubiquitinated by USP1 as cells enter G2/M, or once DNA repair is completed (PubMed:15694335, PubMed:36385258). Monoubiquitination requires the joint intervention of the FANC core complex, including FANCA, FANCB, FANCC, FANCE, FANCF, FANCG, and FANCM, and proteins involved in cell cycle checkpoints and DNA repair, including RPA1, ATR, CHEK1 and BRCA1, and is mediated by FANCL/PHF9 (PubMed:12973351). Monoubiquitination prevents DNA release from the FANCI-FANCD2 complex (By similarity). FANCD2 is only ubiquitinated in the FANCI-FANCD2 complex and the monoubiquitination of FANCD2 is promoted by phosphorylation of FANCI (By similarity). Ubiquitination is required for binding to chromatin, interaction with BRCA1, BRCA2 and MTMR15/FAN1, DNA repair, and normal cell cycle progression, but not for phosphorylation on Ser-222 or interaction with MEN1 (PubMed:12086603, PubMed:15650050).</text>
</comment>
<comment type="PTM">
    <text evidence="5 12 16 19">Phosphorylated in response to various genotoxic stresses by ATM and/or ATR (PubMed:14988723, PubMed:15314022). Upon ionizing radiation, phosphorylated by ATM on Ser-222 and Ser-1404 (PubMed:12086603). Phosphorylation on Ser-222 is required for S-phase checkpoint activation, but not for ubiquitination, foci formation, or DNA repair (PubMed:12086603, PubMed:15650050). In contrast, phosphorylation by ATR on other sites may be required for ubiquitination and foci formation.</text>
</comment>
<comment type="disease" evidence="3">
    <disease id="DI-02763">
        <name>Fanconi anemia complementation group D2</name>
        <acronym>FANCD2</acronym>
        <description>A disorder affecting all bone marrow elements and resulting in anemia, leukopenia and thrombopenia. It is associated with cardiac, renal and limb malformations, dermal pigmentary changes, and a predisposition to the development of malignancies. At the cellular level it is associated with hypersensitivity to DNA-damaging agents, chromosomal instability (increased chromosome breakage) and defective DNA repair.</description>
        <dbReference type="MIM" id="227646"/>
    </disease>
    <text>The disease is caused by variants affecting the gene represented in this entry.</text>
</comment>
<comment type="miscellaneous">
    <molecule>Isoform 1</molecule>
    <text evidence="39">Less abundant than isoform 2, may be not functional.</text>
</comment>
<comment type="similarity">
    <text evidence="39">Belongs to the Fanconi anemia protein FANCD2 family.</text>
</comment>
<comment type="sequence caution" evidence="39">
    <conflict type="erroneous initiation">
        <sequence resource="EMBL-CDS" id="BAB14132"/>
    </conflict>
    <text>Truncated N-terminus.</text>
</comment>
<comment type="online information" name="Atlas of Genetics and Cytogenetics in Oncology and Haematology">
    <link uri="https://atlasgeneticsoncology.org/gene/103/FAD"/>
</comment>
<comment type="online information" name="Fanconi Anemia Mutation Database">
    <link uri="https://www2.rockefeller.edu/fanconi/genes/jumpd2"/>
</comment>
<name>FACD2_HUMAN</name>
<accession>Q9BXW9</accession>
<accession>Q2LA86</accession>
<accession>Q69YP9</accession>
<accession>Q6PJN7</accession>
<accession>Q9BQ06</accession>
<accession>Q9H9T9</accession>
<proteinExistence type="evidence at protein level"/>
<dbReference type="EMBL" id="AF230336">
    <property type="protein sequence ID" value="AAL05980.1"/>
    <property type="molecule type" value="mRNA"/>
</dbReference>
<dbReference type="EMBL" id="AF273251">
    <property type="protein sequence ID" value="AAK18772.1"/>
    <property type="molecule type" value="Genomic_DNA"/>
</dbReference>
<dbReference type="EMBL" id="AF273222">
    <property type="protein sequence ID" value="AAK18772.1"/>
    <property type="status" value="JOINED"/>
    <property type="molecule type" value="Genomic_DNA"/>
</dbReference>
<dbReference type="EMBL" id="AF273223">
    <property type="protein sequence ID" value="AAK18772.1"/>
    <property type="status" value="JOINED"/>
    <property type="molecule type" value="Genomic_DNA"/>
</dbReference>
<dbReference type="EMBL" id="AF273227">
    <property type="protein sequence ID" value="AAK18772.1"/>
    <property type="status" value="JOINED"/>
    <property type="molecule type" value="Genomic_DNA"/>
</dbReference>
<dbReference type="EMBL" id="AF273231">
    <property type="protein sequence ID" value="AAK18772.1"/>
    <property type="status" value="JOINED"/>
    <property type="molecule type" value="Genomic_DNA"/>
</dbReference>
<dbReference type="EMBL" id="AF273235">
    <property type="protein sequence ID" value="AAK18772.1"/>
    <property type="status" value="JOINED"/>
    <property type="molecule type" value="Genomic_DNA"/>
</dbReference>
<dbReference type="EMBL" id="AF273243">
    <property type="protein sequence ID" value="AAK18772.1"/>
    <property type="status" value="JOINED"/>
    <property type="molecule type" value="Genomic_DNA"/>
</dbReference>
<dbReference type="EMBL" id="AF273241">
    <property type="protein sequence ID" value="AAK18772.1"/>
    <property type="status" value="JOINED"/>
    <property type="molecule type" value="Genomic_DNA"/>
</dbReference>
<dbReference type="EMBL" id="AF273239">
    <property type="protein sequence ID" value="AAK18772.1"/>
    <property type="status" value="JOINED"/>
    <property type="molecule type" value="Genomic_DNA"/>
</dbReference>
<dbReference type="EMBL" id="AF273245">
    <property type="protein sequence ID" value="AAK18772.1"/>
    <property type="status" value="JOINED"/>
    <property type="molecule type" value="Genomic_DNA"/>
</dbReference>
<dbReference type="EMBL" id="AF273246">
    <property type="protein sequence ID" value="AAK18772.1"/>
    <property type="status" value="JOINED"/>
    <property type="molecule type" value="Genomic_DNA"/>
</dbReference>
<dbReference type="EMBL" id="AF273247">
    <property type="protein sequence ID" value="AAK18772.1"/>
    <property type="status" value="JOINED"/>
    <property type="molecule type" value="Genomic_DNA"/>
</dbReference>
<dbReference type="EMBL" id="AF273248">
    <property type="protein sequence ID" value="AAK18772.1"/>
    <property type="status" value="JOINED"/>
    <property type="molecule type" value="Genomic_DNA"/>
</dbReference>
<dbReference type="EMBL" id="AF273249">
    <property type="protein sequence ID" value="AAK18772.1"/>
    <property type="status" value="JOINED"/>
    <property type="molecule type" value="Genomic_DNA"/>
</dbReference>
<dbReference type="EMBL" id="AF273250">
    <property type="protein sequence ID" value="AAK18772.1"/>
    <property type="status" value="JOINED"/>
    <property type="molecule type" value="Genomic_DNA"/>
</dbReference>
<dbReference type="EMBL" id="AF273236">
    <property type="protein sequence ID" value="AAK18772.1"/>
    <property type="status" value="JOINED"/>
    <property type="molecule type" value="Genomic_DNA"/>
</dbReference>
<dbReference type="EMBL" id="AF273237">
    <property type="protein sequence ID" value="AAK18772.1"/>
    <property type="status" value="JOINED"/>
    <property type="molecule type" value="Genomic_DNA"/>
</dbReference>
<dbReference type="EMBL" id="AF273238">
    <property type="protein sequence ID" value="AAK18772.1"/>
    <property type="status" value="JOINED"/>
    <property type="molecule type" value="Genomic_DNA"/>
</dbReference>
<dbReference type="EMBL" id="AF273224">
    <property type="protein sequence ID" value="AAK18772.1"/>
    <property type="status" value="JOINED"/>
    <property type="molecule type" value="Genomic_DNA"/>
</dbReference>
<dbReference type="EMBL" id="AF273226">
    <property type="protein sequence ID" value="AAK18772.1"/>
    <property type="status" value="JOINED"/>
    <property type="molecule type" value="Genomic_DNA"/>
</dbReference>
<dbReference type="EMBL" id="AF273228">
    <property type="protein sequence ID" value="AAK18772.1"/>
    <property type="status" value="JOINED"/>
    <property type="molecule type" value="Genomic_DNA"/>
</dbReference>
<dbReference type="EMBL" id="AF273230">
    <property type="protein sequence ID" value="AAK18772.1"/>
    <property type="status" value="JOINED"/>
    <property type="molecule type" value="Genomic_DNA"/>
</dbReference>
<dbReference type="EMBL" id="AF273232">
    <property type="protein sequence ID" value="AAK18772.1"/>
    <property type="status" value="JOINED"/>
    <property type="molecule type" value="Genomic_DNA"/>
</dbReference>
<dbReference type="EMBL" id="AF273234">
    <property type="protein sequence ID" value="AAK18772.1"/>
    <property type="status" value="JOINED"/>
    <property type="molecule type" value="Genomic_DNA"/>
</dbReference>
<dbReference type="EMBL" id="AF273240">
    <property type="protein sequence ID" value="AAK18772.1"/>
    <property type="status" value="JOINED"/>
    <property type="molecule type" value="Genomic_DNA"/>
</dbReference>
<dbReference type="EMBL" id="AF273242">
    <property type="protein sequence ID" value="AAK18772.1"/>
    <property type="status" value="JOINED"/>
    <property type="molecule type" value="Genomic_DNA"/>
</dbReference>
<dbReference type="EMBL" id="AF273244">
    <property type="protein sequence ID" value="AAK18772.1"/>
    <property type="status" value="JOINED"/>
    <property type="molecule type" value="Genomic_DNA"/>
</dbReference>
<dbReference type="EMBL" id="AF273233">
    <property type="protein sequence ID" value="AAK18772.1"/>
    <property type="status" value="JOINED"/>
    <property type="molecule type" value="Genomic_DNA"/>
</dbReference>
<dbReference type="EMBL" id="AF273229">
    <property type="protein sequence ID" value="AAK18772.1"/>
    <property type="status" value="JOINED"/>
    <property type="molecule type" value="Genomic_DNA"/>
</dbReference>
<dbReference type="EMBL" id="AF273225">
    <property type="protein sequence ID" value="AAK18772.1"/>
    <property type="status" value="JOINED"/>
    <property type="molecule type" value="Genomic_DNA"/>
</dbReference>
<dbReference type="EMBL" id="AF273251">
    <property type="protein sequence ID" value="AAK18773.1"/>
    <property type="molecule type" value="Genomic_DNA"/>
</dbReference>
<dbReference type="EMBL" id="AF273222">
    <property type="protein sequence ID" value="AAK18773.1"/>
    <property type="status" value="JOINED"/>
    <property type="molecule type" value="Genomic_DNA"/>
</dbReference>
<dbReference type="EMBL" id="AF273223">
    <property type="protein sequence ID" value="AAK18773.1"/>
    <property type="status" value="JOINED"/>
    <property type="molecule type" value="Genomic_DNA"/>
</dbReference>
<dbReference type="EMBL" id="AF273224">
    <property type="protein sequence ID" value="AAK18773.1"/>
    <property type="status" value="JOINED"/>
    <property type="molecule type" value="Genomic_DNA"/>
</dbReference>
<dbReference type="EMBL" id="AF273225">
    <property type="protein sequence ID" value="AAK18773.1"/>
    <property type="status" value="JOINED"/>
    <property type="molecule type" value="Genomic_DNA"/>
</dbReference>
<dbReference type="EMBL" id="AF273226">
    <property type="protein sequence ID" value="AAK18773.1"/>
    <property type="status" value="JOINED"/>
    <property type="molecule type" value="Genomic_DNA"/>
</dbReference>
<dbReference type="EMBL" id="AF273227">
    <property type="protein sequence ID" value="AAK18773.1"/>
    <property type="status" value="JOINED"/>
    <property type="molecule type" value="Genomic_DNA"/>
</dbReference>
<dbReference type="EMBL" id="AF273228">
    <property type="protein sequence ID" value="AAK18773.1"/>
    <property type="status" value="JOINED"/>
    <property type="molecule type" value="Genomic_DNA"/>
</dbReference>
<dbReference type="EMBL" id="AF273229">
    <property type="protein sequence ID" value="AAK18773.1"/>
    <property type="status" value="JOINED"/>
    <property type="molecule type" value="Genomic_DNA"/>
</dbReference>
<dbReference type="EMBL" id="AF273230">
    <property type="protein sequence ID" value="AAK18773.1"/>
    <property type="status" value="JOINED"/>
    <property type="molecule type" value="Genomic_DNA"/>
</dbReference>
<dbReference type="EMBL" id="AF273231">
    <property type="protein sequence ID" value="AAK18773.1"/>
    <property type="status" value="JOINED"/>
    <property type="molecule type" value="Genomic_DNA"/>
</dbReference>
<dbReference type="EMBL" id="AF273232">
    <property type="protein sequence ID" value="AAK18773.1"/>
    <property type="status" value="JOINED"/>
    <property type="molecule type" value="Genomic_DNA"/>
</dbReference>
<dbReference type="EMBL" id="AF273233">
    <property type="protein sequence ID" value="AAK18773.1"/>
    <property type="status" value="JOINED"/>
    <property type="molecule type" value="Genomic_DNA"/>
</dbReference>
<dbReference type="EMBL" id="AF273234">
    <property type="protein sequence ID" value="AAK18773.1"/>
    <property type="status" value="JOINED"/>
    <property type="molecule type" value="Genomic_DNA"/>
</dbReference>
<dbReference type="EMBL" id="AF273235">
    <property type="protein sequence ID" value="AAK18773.1"/>
    <property type="status" value="JOINED"/>
    <property type="molecule type" value="Genomic_DNA"/>
</dbReference>
<dbReference type="EMBL" id="AF273236">
    <property type="protein sequence ID" value="AAK18773.1"/>
    <property type="status" value="JOINED"/>
    <property type="molecule type" value="Genomic_DNA"/>
</dbReference>
<dbReference type="EMBL" id="AF273237">
    <property type="protein sequence ID" value="AAK18773.1"/>
    <property type="status" value="JOINED"/>
    <property type="molecule type" value="Genomic_DNA"/>
</dbReference>
<dbReference type="EMBL" id="AF273238">
    <property type="protein sequence ID" value="AAK18773.1"/>
    <property type="status" value="JOINED"/>
    <property type="molecule type" value="Genomic_DNA"/>
</dbReference>
<dbReference type="EMBL" id="AF273239">
    <property type="protein sequence ID" value="AAK18773.1"/>
    <property type="status" value="JOINED"/>
    <property type="molecule type" value="Genomic_DNA"/>
</dbReference>
<dbReference type="EMBL" id="AF273240">
    <property type="protein sequence ID" value="AAK18773.1"/>
    <property type="status" value="JOINED"/>
    <property type="molecule type" value="Genomic_DNA"/>
</dbReference>
<dbReference type="EMBL" id="AF273241">
    <property type="protein sequence ID" value="AAK18773.1"/>
    <property type="status" value="JOINED"/>
    <property type="molecule type" value="Genomic_DNA"/>
</dbReference>
<dbReference type="EMBL" id="AF273242">
    <property type="protein sequence ID" value="AAK18773.1"/>
    <property type="status" value="JOINED"/>
    <property type="molecule type" value="Genomic_DNA"/>
</dbReference>
<dbReference type="EMBL" id="AF273243">
    <property type="protein sequence ID" value="AAK18773.1"/>
    <property type="status" value="JOINED"/>
    <property type="molecule type" value="Genomic_DNA"/>
</dbReference>
<dbReference type="EMBL" id="AF273244">
    <property type="protein sequence ID" value="AAK18773.1"/>
    <property type="status" value="JOINED"/>
    <property type="molecule type" value="Genomic_DNA"/>
</dbReference>
<dbReference type="EMBL" id="AF273245">
    <property type="protein sequence ID" value="AAK18773.1"/>
    <property type="status" value="JOINED"/>
    <property type="molecule type" value="Genomic_DNA"/>
</dbReference>
<dbReference type="EMBL" id="AF273246">
    <property type="protein sequence ID" value="AAK18773.1"/>
    <property type="status" value="JOINED"/>
    <property type="molecule type" value="Genomic_DNA"/>
</dbReference>
<dbReference type="EMBL" id="AF273247">
    <property type="protein sequence ID" value="AAK18773.1"/>
    <property type="status" value="JOINED"/>
    <property type="molecule type" value="Genomic_DNA"/>
</dbReference>
<dbReference type="EMBL" id="AF273248">
    <property type="protein sequence ID" value="AAK18773.1"/>
    <property type="status" value="JOINED"/>
    <property type="molecule type" value="Genomic_DNA"/>
</dbReference>
<dbReference type="EMBL" id="AF273249">
    <property type="protein sequence ID" value="AAK18773.1"/>
    <property type="status" value="JOINED"/>
    <property type="molecule type" value="Genomic_DNA"/>
</dbReference>
<dbReference type="EMBL" id="AF273250">
    <property type="protein sequence ID" value="AAK18773.1"/>
    <property type="status" value="JOINED"/>
    <property type="molecule type" value="Genomic_DNA"/>
</dbReference>
<dbReference type="EMBL" id="AF340183">
    <property type="protein sequence ID" value="AAK15369.1"/>
    <property type="molecule type" value="mRNA"/>
</dbReference>
<dbReference type="EMBL" id="DQ341263">
    <property type="protein sequence ID" value="ABC67466.1"/>
    <property type="molecule type" value="Genomic_DNA"/>
</dbReference>
<dbReference type="EMBL" id="BC013582">
    <property type="protein sequence ID" value="AAH13582.1"/>
    <property type="molecule type" value="mRNA"/>
</dbReference>
<dbReference type="EMBL" id="AK022613">
    <property type="protein sequence ID" value="BAB14132.1"/>
    <property type="status" value="ALT_INIT"/>
    <property type="molecule type" value="mRNA"/>
</dbReference>
<dbReference type="EMBL" id="AL832427">
    <property type="protein sequence ID" value="CAH10647.1"/>
    <property type="molecule type" value="mRNA"/>
</dbReference>
<dbReference type="CCDS" id="CCDS2595.1">
    <molecule id="Q9BXW9-1"/>
</dbReference>
<dbReference type="CCDS" id="CCDS33696.1">
    <molecule id="Q9BXW9-2"/>
</dbReference>
<dbReference type="RefSeq" id="NP_001018125.1">
    <molecule id="Q9BXW9-2"/>
    <property type="nucleotide sequence ID" value="NM_001018115.3"/>
</dbReference>
<dbReference type="RefSeq" id="NP_001306913.1">
    <molecule id="Q9BXW9-2"/>
    <property type="nucleotide sequence ID" value="NM_001319984.2"/>
</dbReference>
<dbReference type="RefSeq" id="NP_149075.2">
    <molecule id="Q9BXW9-1"/>
    <property type="nucleotide sequence ID" value="NM_033084.4"/>
</dbReference>
<dbReference type="PDB" id="6VAA">
    <property type="method" value="EM"/>
    <property type="resolution" value="3.35 A"/>
    <property type="chains" value="B=1-1451"/>
</dbReference>
<dbReference type="PDB" id="6VAD">
    <property type="method" value="EM"/>
    <property type="resolution" value="3.35 A"/>
    <property type="chains" value="B=1-1451"/>
</dbReference>
<dbReference type="PDB" id="6VAE">
    <property type="method" value="EM"/>
    <property type="resolution" value="3.50 A"/>
    <property type="chains" value="B=1-1451"/>
</dbReference>
<dbReference type="PDB" id="6VAF">
    <property type="method" value="EM"/>
    <property type="resolution" value="3.90 A"/>
    <property type="chains" value="B=1-1451"/>
</dbReference>
<dbReference type="PDB" id="7AY1">
    <property type="method" value="EM"/>
    <property type="resolution" value="3.70 A"/>
    <property type="chains" value="B=1-1451"/>
</dbReference>
<dbReference type="PDB" id="7KZQ">
    <property type="method" value="EM"/>
    <property type="resolution" value="4.20 A"/>
    <property type="chains" value="V=1-1451"/>
</dbReference>
<dbReference type="PDB" id="7KZR">
    <property type="method" value="EM"/>
    <property type="resolution" value="4.20 A"/>
    <property type="chains" value="V=1-1451"/>
</dbReference>
<dbReference type="PDB" id="7KZS">
    <property type="method" value="EM"/>
    <property type="resolution" value="4.20 A"/>
    <property type="chains" value="V=1-1451"/>
</dbReference>
<dbReference type="PDB" id="7KZT">
    <property type="method" value="EM"/>
    <property type="resolution" value="4.20 A"/>
    <property type="chains" value="V=1-1451"/>
</dbReference>
<dbReference type="PDB" id="7KZV">
    <property type="method" value="EM"/>
    <property type="resolution" value="4.20 A"/>
    <property type="chains" value="V=1-1451"/>
</dbReference>
<dbReference type="PDB" id="7ZF1">
    <property type="method" value="EM"/>
    <property type="resolution" value="4.14 A"/>
    <property type="chains" value="B=1-1451"/>
</dbReference>
<dbReference type="PDB" id="8A9J">
    <property type="method" value="EM"/>
    <property type="resolution" value="2.80 A"/>
    <property type="chains" value="B=1-1451"/>
</dbReference>
<dbReference type="PDB" id="8A9K">
    <property type="method" value="EM"/>
    <property type="resolution" value="2.85 A"/>
    <property type="chains" value="B=1-1451"/>
</dbReference>
<dbReference type="PDBsum" id="6VAA"/>
<dbReference type="PDBsum" id="6VAD"/>
<dbReference type="PDBsum" id="6VAE"/>
<dbReference type="PDBsum" id="6VAF"/>
<dbReference type="PDBsum" id="7AY1"/>
<dbReference type="PDBsum" id="7KZQ"/>
<dbReference type="PDBsum" id="7KZR"/>
<dbReference type="PDBsum" id="7KZS"/>
<dbReference type="PDBsum" id="7KZT"/>
<dbReference type="PDBsum" id="7KZV"/>
<dbReference type="PDBsum" id="7ZF1"/>
<dbReference type="PDBsum" id="8A9J"/>
<dbReference type="PDBsum" id="8A9K"/>
<dbReference type="EMDB" id="EMD-11934"/>
<dbReference type="EMDB" id="EMD-14694"/>
<dbReference type="EMDB" id="EMD-14719"/>
<dbReference type="EMDB" id="EMD-14722"/>
<dbReference type="EMDB" id="EMD-15284"/>
<dbReference type="EMDB" id="EMD-21134"/>
<dbReference type="EMDB" id="EMD-21137"/>
<dbReference type="EMDB" id="EMD-21138"/>
<dbReference type="EMDB" id="EMD-21139"/>
<dbReference type="EMDB" id="EMD-23086"/>
<dbReference type="EMDB" id="EMD-23087"/>
<dbReference type="EMDB" id="EMD-23088"/>
<dbReference type="EMDB" id="EMD-23089"/>
<dbReference type="EMDB" id="EMD-23090"/>
<dbReference type="SMR" id="Q9BXW9"/>
<dbReference type="BioGRID" id="108474">
    <property type="interactions" value="883"/>
</dbReference>
<dbReference type="ComplexPortal" id="CPX-6264">
    <property type="entry name" value="Fanconi anemia ID complex"/>
</dbReference>
<dbReference type="CORUM" id="Q9BXW9"/>
<dbReference type="DIP" id="DIP-27606N"/>
<dbReference type="DIP" id="DIP-29382N"/>
<dbReference type="FunCoup" id="Q9BXW9">
    <property type="interactions" value="3784"/>
</dbReference>
<dbReference type="IntAct" id="Q9BXW9">
    <property type="interactions" value="123"/>
</dbReference>
<dbReference type="MINT" id="Q9BXW9"/>
<dbReference type="STRING" id="9606.ENSP00000287647"/>
<dbReference type="ChEMBL" id="CHEMBL2157857"/>
<dbReference type="GlyGen" id="Q9BXW9">
    <property type="glycosylation" value="5 sites, 1 O-linked glycan (3 sites)"/>
</dbReference>
<dbReference type="iPTMnet" id="Q9BXW9"/>
<dbReference type="PhosphoSitePlus" id="Q9BXW9"/>
<dbReference type="BioMuta" id="FANCD2"/>
<dbReference type="DMDM" id="67461071"/>
<dbReference type="CPTAC" id="CPTAC-3227"/>
<dbReference type="CPTAC" id="CPTAC-3228"/>
<dbReference type="CPTAC" id="CPTAC-3229"/>
<dbReference type="jPOST" id="Q9BXW9"/>
<dbReference type="MassIVE" id="Q9BXW9"/>
<dbReference type="PaxDb" id="9606-ENSP00000287647"/>
<dbReference type="PeptideAtlas" id="Q9BXW9"/>
<dbReference type="ProteomicsDB" id="79531">
    <molecule id="Q9BXW9-2"/>
</dbReference>
<dbReference type="ProteomicsDB" id="79532">
    <molecule id="Q9BXW9-2"/>
</dbReference>
<dbReference type="ProteomicsDB" id="79533">
    <molecule id="Q9BXW9-3"/>
</dbReference>
<dbReference type="ProteomicsDB" id="79534">
    <molecule id="Q9BXW9-4"/>
</dbReference>
<dbReference type="Pumba" id="Q9BXW9"/>
<dbReference type="Antibodypedia" id="10521">
    <property type="antibodies" value="647 antibodies from 39 providers"/>
</dbReference>
<dbReference type="CPTC" id="Q9BXW9">
    <property type="antibodies" value="2 antibodies"/>
</dbReference>
<dbReference type="DNASU" id="2177"/>
<dbReference type="Ensembl" id="ENST00000287647.7">
    <molecule id="Q9BXW9-1"/>
    <property type="protein sequence ID" value="ENSP00000287647.3"/>
    <property type="gene ID" value="ENSG00000144554.13"/>
</dbReference>
<dbReference type="Ensembl" id="ENST00000419585.5">
    <molecule id="Q9BXW9-2"/>
    <property type="protein sequence ID" value="ENSP00000398754.1"/>
    <property type="gene ID" value="ENSG00000144554.13"/>
</dbReference>
<dbReference type="Ensembl" id="ENST00000431693.1">
    <molecule id="Q9BXW9-4"/>
    <property type="protein sequence ID" value="ENSP00000399354.1"/>
    <property type="gene ID" value="ENSG00000144554.13"/>
</dbReference>
<dbReference type="Ensembl" id="ENST00000675286.1">
    <molecule id="Q9BXW9-2"/>
    <property type="protein sequence ID" value="ENSP00000502379.1"/>
    <property type="gene ID" value="ENSG00000144554.13"/>
</dbReference>
<dbReference type="GeneID" id="2177"/>
<dbReference type="KEGG" id="hsa:2177"/>
<dbReference type="MANE-Select" id="ENST00000675286.1">
    <property type="protein sequence ID" value="ENSP00000502379.1"/>
    <property type="RefSeq nucleotide sequence ID" value="NM_001018115.3"/>
    <property type="RefSeq protein sequence ID" value="NP_001018125.1"/>
</dbReference>
<dbReference type="UCSC" id="uc003buw.4">
    <molecule id="Q9BXW9-2"/>
    <property type="organism name" value="human"/>
</dbReference>
<dbReference type="AGR" id="HGNC:3585"/>
<dbReference type="CTD" id="2177"/>
<dbReference type="DisGeNET" id="2177"/>
<dbReference type="GeneCards" id="FANCD2"/>
<dbReference type="GeneReviews" id="FANCD2"/>
<dbReference type="HGNC" id="HGNC:3585">
    <property type="gene designation" value="FANCD2"/>
</dbReference>
<dbReference type="HPA" id="ENSG00000144554">
    <property type="expression patterns" value="Tissue enhanced (bone marrow, lymphoid tissue)"/>
</dbReference>
<dbReference type="MalaCards" id="FANCD2"/>
<dbReference type="MIM" id="227646">
    <property type="type" value="phenotype"/>
</dbReference>
<dbReference type="MIM" id="613984">
    <property type="type" value="gene"/>
</dbReference>
<dbReference type="neXtProt" id="NX_Q9BXW9"/>
<dbReference type="OpenTargets" id="ENSG00000144554"/>
<dbReference type="Orphanet" id="84">
    <property type="disease" value="Fanconi anemia"/>
</dbReference>
<dbReference type="PharmGKB" id="PA27999"/>
<dbReference type="VEuPathDB" id="HostDB:ENSG00000144554"/>
<dbReference type="eggNOG" id="KOG4712">
    <property type="taxonomic scope" value="Eukaryota"/>
</dbReference>
<dbReference type="GeneTree" id="ENSGT00390000016970"/>
<dbReference type="HOGENOM" id="CLU_002068_1_0_1"/>
<dbReference type="InParanoid" id="Q9BXW9"/>
<dbReference type="OMA" id="QCIRGNT"/>
<dbReference type="OrthoDB" id="27031at2759"/>
<dbReference type="PAN-GO" id="Q9BXW9">
    <property type="GO annotations" value="7 GO annotations based on evolutionary models"/>
</dbReference>
<dbReference type="TreeFam" id="TF101106"/>
<dbReference type="PathwayCommons" id="Q9BXW9"/>
<dbReference type="Reactome" id="R-HSA-6783310">
    <property type="pathway name" value="Fanconi Anemia Pathway"/>
</dbReference>
<dbReference type="Reactome" id="R-HSA-6796648">
    <property type="pathway name" value="TP53 Regulates Transcription of DNA Repair Genes"/>
</dbReference>
<dbReference type="SignaLink" id="Q9BXW9"/>
<dbReference type="SIGNOR" id="Q9BXW9"/>
<dbReference type="BioGRID-ORCS" id="2177">
    <property type="hits" value="100 hits in 1172 CRISPR screens"/>
</dbReference>
<dbReference type="ChiTaRS" id="FANCD2">
    <property type="organism name" value="human"/>
</dbReference>
<dbReference type="GeneWiki" id="FANCD2"/>
<dbReference type="GenomeRNAi" id="2177"/>
<dbReference type="Pharos" id="Q9BXW9">
    <property type="development level" value="Tbio"/>
</dbReference>
<dbReference type="PRO" id="PR:Q9BXW9"/>
<dbReference type="Proteomes" id="UP000005640">
    <property type="component" value="Chromosome 3"/>
</dbReference>
<dbReference type="RNAct" id="Q9BXW9">
    <property type="molecule type" value="protein"/>
</dbReference>
<dbReference type="Bgee" id="ENSG00000144554">
    <property type="expression patterns" value="Expressed in male germ line stem cell (sensu Vertebrata) in testis and 132 other cell types or tissues"/>
</dbReference>
<dbReference type="ExpressionAtlas" id="Q9BXW9">
    <property type="expression patterns" value="baseline and differential"/>
</dbReference>
<dbReference type="GO" id="GO:0000785">
    <property type="term" value="C:chromatin"/>
    <property type="evidence" value="ECO:0000303"/>
    <property type="project" value="ComplexPortal"/>
</dbReference>
<dbReference type="GO" id="GO:0000793">
    <property type="term" value="C:condensed chromosome"/>
    <property type="evidence" value="ECO:0000318"/>
    <property type="project" value="GO_Central"/>
</dbReference>
<dbReference type="GO" id="GO:0005829">
    <property type="term" value="C:cytosol"/>
    <property type="evidence" value="ECO:0000314"/>
    <property type="project" value="HPA"/>
</dbReference>
<dbReference type="GO" id="GO:1990391">
    <property type="term" value="C:DNA repair complex"/>
    <property type="evidence" value="ECO:0000353"/>
    <property type="project" value="ComplexPortal"/>
</dbReference>
<dbReference type="GO" id="GO:0016604">
    <property type="term" value="C:nuclear body"/>
    <property type="evidence" value="ECO:0000314"/>
    <property type="project" value="HPA"/>
</dbReference>
<dbReference type="GO" id="GO:0005730">
    <property type="term" value="C:nucleolus"/>
    <property type="evidence" value="ECO:0000314"/>
    <property type="project" value="HPA"/>
</dbReference>
<dbReference type="GO" id="GO:0005654">
    <property type="term" value="C:nucleoplasm"/>
    <property type="evidence" value="ECO:0000314"/>
    <property type="project" value="HPA"/>
</dbReference>
<dbReference type="GO" id="GO:0005634">
    <property type="term" value="C:nucleus"/>
    <property type="evidence" value="ECO:0000314"/>
    <property type="project" value="ParkinsonsUK-UCL"/>
</dbReference>
<dbReference type="GO" id="GO:0070182">
    <property type="term" value="F:DNA polymerase binding"/>
    <property type="evidence" value="ECO:0000353"/>
    <property type="project" value="UniProtKB"/>
</dbReference>
<dbReference type="GO" id="GO:0048854">
    <property type="term" value="P:brain morphogenesis"/>
    <property type="evidence" value="ECO:0007669"/>
    <property type="project" value="Ensembl"/>
</dbReference>
<dbReference type="GO" id="GO:0034599">
    <property type="term" value="P:cellular response to oxidative stress"/>
    <property type="evidence" value="ECO:0007669"/>
    <property type="project" value="Ensembl"/>
</dbReference>
<dbReference type="GO" id="GO:1990918">
    <property type="term" value="P:double-strand break repair involved in meiotic recombination"/>
    <property type="evidence" value="ECO:0000318"/>
    <property type="project" value="GO_Central"/>
</dbReference>
<dbReference type="GO" id="GO:0007276">
    <property type="term" value="P:gamete generation"/>
    <property type="evidence" value="ECO:0007669"/>
    <property type="project" value="Ensembl"/>
</dbReference>
<dbReference type="GO" id="GO:0007129">
    <property type="term" value="P:homologous chromosome pairing at meiosis"/>
    <property type="evidence" value="ECO:0000318"/>
    <property type="project" value="GO_Central"/>
</dbReference>
<dbReference type="GO" id="GO:0036297">
    <property type="term" value="P:interstrand cross-link repair"/>
    <property type="evidence" value="ECO:0000318"/>
    <property type="project" value="GO_Central"/>
</dbReference>
<dbReference type="GO" id="GO:0031573">
    <property type="term" value="P:mitotic intra-S DNA damage checkpoint signaling"/>
    <property type="evidence" value="ECO:0000318"/>
    <property type="project" value="GO_Central"/>
</dbReference>
<dbReference type="GO" id="GO:0097150">
    <property type="term" value="P:neuronal stem cell population maintenance"/>
    <property type="evidence" value="ECO:0007669"/>
    <property type="project" value="Ensembl"/>
</dbReference>
<dbReference type="GO" id="GO:2000348">
    <property type="term" value="P:regulation of CD40 signaling pathway"/>
    <property type="evidence" value="ECO:0007669"/>
    <property type="project" value="Ensembl"/>
</dbReference>
<dbReference type="GO" id="GO:0050727">
    <property type="term" value="P:regulation of inflammatory response"/>
    <property type="evidence" value="ECO:0007669"/>
    <property type="project" value="Ensembl"/>
</dbReference>
<dbReference type="GO" id="GO:0045589">
    <property type="term" value="P:regulation of regulatory T cell differentiation"/>
    <property type="evidence" value="ECO:0007669"/>
    <property type="project" value="Ensembl"/>
</dbReference>
<dbReference type="GO" id="GO:0010332">
    <property type="term" value="P:response to gamma radiation"/>
    <property type="evidence" value="ECO:0000314"/>
    <property type="project" value="UniProtKB"/>
</dbReference>
<dbReference type="CDD" id="cd11721">
    <property type="entry name" value="FANCD2"/>
    <property type="match status" value="1"/>
</dbReference>
<dbReference type="InterPro" id="IPR029448">
    <property type="entry name" value="FANCD2"/>
</dbReference>
<dbReference type="PANTHER" id="PTHR32086">
    <property type="entry name" value="FANCONI ANEMIA GROUP D2 PROTEIN"/>
    <property type="match status" value="1"/>
</dbReference>
<dbReference type="PANTHER" id="PTHR32086:SF0">
    <property type="entry name" value="FANCONI ANEMIA GROUP D2 PROTEIN"/>
    <property type="match status" value="1"/>
</dbReference>
<dbReference type="Pfam" id="PF14631">
    <property type="entry name" value="FancD2"/>
    <property type="match status" value="1"/>
</dbReference>